<name>PLMN_HUMAN</name>
<keyword id="KW-0002">3D-structure</keyword>
<keyword id="KW-0094">Blood coagulation</keyword>
<keyword id="KW-0165">Cleavage on pair of basic residues</keyword>
<keyword id="KW-0903">Direct protein sequencing</keyword>
<keyword id="KW-0225">Disease variant</keyword>
<keyword id="KW-1015">Disulfide bond</keyword>
<keyword id="KW-0280">Fibrinolysis</keyword>
<keyword id="KW-0325">Glycoprotein</keyword>
<keyword id="KW-0356">Hemostasis</keyword>
<keyword id="KW-0378">Hydrolase</keyword>
<keyword id="KW-0420">Kringle</keyword>
<keyword id="KW-0597">Phosphoprotein</keyword>
<keyword id="KW-0645">Protease</keyword>
<keyword id="KW-1267">Proteomics identification</keyword>
<keyword id="KW-1185">Reference proteome</keyword>
<keyword id="KW-0677">Repeat</keyword>
<keyword id="KW-0964">Secreted</keyword>
<keyword id="KW-0720">Serine protease</keyword>
<keyword id="KW-0732">Signal</keyword>
<keyword id="KW-0792">Thrombophilia</keyword>
<keyword id="KW-0797">Tissue remodeling</keyword>
<keyword id="KW-0865">Zymogen</keyword>
<proteinExistence type="evidence at protein level"/>
<comment type="function">
    <text evidence="10 37">Plasmin dissolves the fibrin of blood clots and acts as a proteolytic factor in a variety of other processes including embryonic development, tissue remodeling, tumor invasion, and inflammation. In ovulation, weakens the walls of the Graafian follicle. It activates the urokinase-type plasminogen activator, collagenases and several complement zymogens, such as C1, C4 and C5 (PubMed:6447255). Cleavage of fibronectin and laminin leads to cell detachment and apoptosis. Also cleaves fibrin, thrombospondin and von Willebrand factor. Its role in tissue remodeling and tumor invasion may be modulated by CSPG4. Binds to cells.</text>
</comment>
<comment type="function">
    <text evidence="10">Angiostatin is an angiogenesis inhibitor that blocks neovascularization and growth of experimental primary and metastatic tumors in vivo.</text>
</comment>
<comment type="function">
    <text evidence="18">(Microbial infection) ENO/enoloase from parasite P.falciparum (strain NF54) interacts with PLG present in the mosquito blood meal to promote the invasion of the mosquito midgut by the parasite ookinete (PubMed:21949403). The catalytic active form, plasmin, is essential for the invasion of the mosquito midgut (PubMed:21949403).</text>
</comment>
<comment type="function">
    <text evidence="19">(Microbial infection) Binds to OspC on the surface of B.burgdorferi cells, possibly conferring an extracellular protease activity on the bacteria that allows it to traverse host tissue.</text>
</comment>
<comment type="function">
    <text evidence="28">(Microbial infection) Interacts with dengue virus type 2 particles (PubMed:31726374). Enhances dengue virus type 2 infection in Aedes aegypti mosquito midgut by increasing midgut internalization, resulting in higher infection rates and viral dissemination in mosquitoes (PubMed:31726374).</text>
</comment>
<comment type="catalytic activity">
    <reaction evidence="17 37">
        <text>Preferential cleavage: Lys-|-Xaa &gt; Arg-|-Xaa, higher selectivity than trypsin. Converts fibrin into soluble products.</text>
        <dbReference type="EC" id="3.4.21.7"/>
    </reaction>
</comment>
<comment type="activity regulation">
    <text evidence="10">Converted into plasmin by plasminogen activators, both plasminogen and its activator being bound to fibrin. Activated with catalytic amounts of streptokinase. Plasmin activity inhibited by SERPINE2.</text>
</comment>
<comment type="subunit">
    <text evidence="5 7 11 13 15 28 32 33 34 40">Interacts (both mature PLG and the angiostatin peptide) with CSPG4 and AMOT (PubMed:10889192, PubMed:16043488). Interacts (via the Kringle domains) with HRG; the interaction tethers PLG to the cell surface and enhances its activation (PubMed:19712047, PubMed:9102401). Interacts (via Kringle 4 domain) with ADA; the interaction stimulates PLG activation when in complex with DPP4 (PubMed:15016824). Angiostatin: Interacts with ATP5F1A; the interaction inhibits most of the angiogenic effects of angiostatin (PubMed:10077593). Interacts (plasmin) with iripin-8, a serine protease inhibitor from Ixodes ricinus saliva (PubMed:34502392). Interacts (plasmin) with iripin-1, a serine protease inhibitor from Ixodes ricinus saliva (PubMed:36756125). Interacts (plasmin) with Kazal-type trypsin inhibitor, a serine protease inhibitor from Aedes aegypti (PubMed:31726374, PubMed:34800067).</text>
</comment>
<comment type="subunit">
    <text evidence="22">(Microbial infection) Interacts with C.albicans GPD2; the interaction is direct and provides active plasmin on the surface of fungal cells.</text>
</comment>
<comment type="subunit">
    <text evidence="23">(Microbial infection) Interacts with Staphylococcus aureus protein FnbB; this interaction provides active plasmin on the surface of bacterial cells.</text>
</comment>
<comment type="subunit">
    <text evidence="18">(Microbial infection) Interacts with P.falciparum (strain NF54) enolase ENO (via DKSLVK motif); the interaction occurs at the ookinete cell surface and is required for ookinete invasion of the mosquito midgut.</text>
</comment>
<comment type="subunit">
    <text evidence="19">(Microbial infection) Interacts with B.burgdorferi OspC.</text>
</comment>
<comment type="interaction">
    <interactant intactId="EBI-999394">
        <id>P00747</id>
    </interactant>
    <interactant intactId="EBI-2114682">
        <id>P02749</id>
        <label>APOH</label>
    </interactant>
    <organismsDiffer>false</organismsDiffer>
    <experiments>2</experiments>
</comment>
<comment type="interaction">
    <interactant intactId="EBI-999394">
        <id>P00747</id>
    </interactant>
    <interactant intactId="EBI-6425864">
        <id>Q3SYB3</id>
        <label>FOXD4L6</label>
    </interactant>
    <organismsDiffer>false</organismsDiffer>
    <experiments>3</experiments>
</comment>
<comment type="interaction">
    <interactant intactId="EBI-999394">
        <id>P00747</id>
    </interactant>
    <interactant intactId="EBI-20724846">
        <id>PRO_0000018520</id>
        <label>LOX</label>
        <dbReference type="UniProtKB" id="P28300"/>
    </interactant>
    <organismsDiffer>false</organismsDiffer>
    <experiments>2</experiments>
</comment>
<comment type="interaction">
    <interactant intactId="EBI-999394">
        <id>P00747</id>
    </interactant>
    <interactant intactId="EBI-6875061">
        <id>Q8N4S9</id>
        <label>MARVELD2</label>
    </interactant>
    <organismsDiffer>false</organismsDiffer>
    <experiments>2</experiments>
</comment>
<comment type="interaction">
    <interactant intactId="EBI-999394">
        <id>P00747</id>
    </interactant>
    <interactant intactId="EBI-2259629">
        <id>P75390</id>
        <label>pdhA</label>
    </interactant>
    <organismsDiffer>true</organismsDiffer>
    <experiments>5</experiments>
</comment>
<comment type="interaction">
    <interactant intactId="EBI-999394">
        <id>P00747</id>
    </interactant>
    <interactant intactId="EBI-2259621">
        <id>P75391</id>
        <label>pdhB</label>
    </interactant>
    <organismsDiffer>true</organismsDiffer>
    <experiments>11</experiments>
</comment>
<comment type="interaction">
    <interactant intactId="EBI-999394">
        <id>P00747</id>
    </interactant>
    <interactant intactId="EBI-2259593">
        <id>P75392</id>
        <label>pdhC</label>
    </interactant>
    <organismsDiffer>true</organismsDiffer>
    <experiments>5</experiments>
</comment>
<comment type="interaction">
    <interactant intactId="EBI-999394">
        <id>P00747</id>
    </interactant>
    <interactant intactId="EBI-2259617">
        <id>P75393</id>
        <label>pdhD</label>
    </interactant>
    <organismsDiffer>true</organismsDiffer>
    <experiments>3</experiments>
</comment>
<comment type="interaction">
    <interactant intactId="EBI-999394">
        <id>P00747</id>
    </interactant>
    <interactant intactId="EBI-7689378">
        <id>Q99SU7</id>
        <label>sak</label>
    </interactant>
    <organismsDiffer>true</organismsDiffer>
    <experiments>7</experiments>
</comment>
<comment type="interaction">
    <interactant intactId="EBI-999394">
        <id>P00747</id>
    </interactant>
    <interactant intactId="EBI-1035089">
        <id>P00779</id>
        <label>skc</label>
    </interactant>
    <organismsDiffer>true</organismsDiffer>
    <experiments>2</experiments>
</comment>
<comment type="interaction">
    <interactant intactId="EBI-999394">
        <id>P00747</id>
    </interactant>
    <interactant intactId="EBI-984250">
        <id>Q6V4L1</id>
    </interactant>
    <organismsDiffer>true</organismsDiffer>
    <experiments>2</experiments>
</comment>
<comment type="interaction">
    <interactant intactId="EBI-999394">
        <id>P00747</id>
    </interactant>
    <interactant intactId="EBI-984286">
        <id>Q6V4L4</id>
    </interactant>
    <organismsDiffer>true</organismsDiffer>
    <experiments>2</experiments>
</comment>
<comment type="interaction">
    <interactant intactId="EBI-999394">
        <id>P00747</id>
    </interactant>
    <interactant intactId="EBI-984118">
        <id>Q6V4L5</id>
    </interactant>
    <organismsDiffer>true</organismsDiffer>
    <experiments>2</experiments>
</comment>
<comment type="interaction">
    <interactant intactId="EBI-999394">
        <id>P00747</id>
    </interactant>
    <interactant intactId="EBI-984197">
        <id>Q6V4L9</id>
    </interactant>
    <organismsDiffer>true</organismsDiffer>
    <experiments>2</experiments>
</comment>
<comment type="subcellular location">
    <subcellularLocation>
        <location evidence="5 10">Secreted</location>
    </subcellularLocation>
    <text>Locates to the cell surface where it is proteolytically cleaved to produce the active plasmin. Interaction with HRG tethers it to the cell surface.</text>
</comment>
<comment type="tissue specificity">
    <text>Present in plasma and many other extracellular fluids. It is synthesized in the liver.</text>
</comment>
<comment type="domain">
    <text evidence="7">Kringle domains mediate interaction with CSPG4.</text>
</comment>
<comment type="PTM">
    <text evidence="14 30 39">N-linked glycan contains N-acetyllactosamine and sialic acid. O-linked glycans consist of Gal-GalNAc disaccharide modified with up to 2 sialic acid residues (microheterogeneity).</text>
</comment>
<comment type="PTM">
    <text evidence="10 43">In the presence of the inhibitor, the activation involves only cleavage after Arg-580, yielding two chains held together by two disulfide bonds. In the absence of the inhibitor, the activation involves additionally the removal of the activation peptide.</text>
</comment>
<comment type="PTM">
    <text evidence="20">(Microbial infection) The Y.pestis Pla protein cleaves between Arg-580 and Val-581, generating plasmin which facilitates bacterial migration and infection (PubMed:22645135).</text>
</comment>
<comment type="disease" evidence="6 9 16 35 36 38 42 44">
    <disease id="DI-02666">
        <name>Plasminogen deficiency</name>
        <acronym>PLGD</acronym>
        <description>A disorder characterized by decreased serum plasminogen activity. Two forms of the disorder are distinguished: type 1 deficiency is additionally characterized by decreased plasminogen antigen levels and clinical symptoms, whereas type 2 deficiency, also known as dysplasminogenemia, is characterized by normal, or slightly reduced antigen levels, and absence of clinical manifestations. Plasminogen deficiency type 1 results in markedly impaired extracellular fibrinolysis and chronic mucosal pseudomembranous lesions due to subepithelial fibrin deposition and inflammation. The most common clinical manifestation of type 1 deficiency is ligneous conjunctivitis in which pseudomembranes formation on the palpebral surfaces of the eye progresses to white, yellow-white, or red thick masses with a wood-like consistency that replace the normal mucosa.</description>
        <dbReference type="MIM" id="217090"/>
    </disease>
    <text>The disease is caused by variants affecting the gene represented in this entry.</text>
</comment>
<comment type="disease" evidence="24 25 26 27 29 31">
    <disease id="DI-06124">
        <name>Angioedema, hereditary, 4</name>
        <acronym>HAE4</acronym>
        <description>A form of angioedema, a disorder characterized by episodic local swelling involving subcutaneous or submucous tissue of the upper respiratory and gastrointestinal tracts, face, extremities, and genitalia. HAE4 is an autosomal dominant form with incomplete penetrance, variable expressivity, and female predominance.</description>
        <dbReference type="MIM" id="619360"/>
    </disease>
    <text>The disease is caused by variants affecting the gene represented in this entry.</text>
</comment>
<comment type="miscellaneous">
    <text>Plasmin is inactivated by alpha-2-antiplasmin immediately after dissociation from the clot.</text>
</comment>
<comment type="similarity">
    <text evidence="2">Belongs to the peptidase S1 family. Plasminogen subfamily.</text>
</comment>
<comment type="online information" name="Wikipedia">
    <link uri="https://en.wikipedia.org/wiki/Plasmin"/>
    <text>Plasmin entry</text>
</comment>
<feature type="signal peptide" evidence="8 46">
    <location>
        <begin position="1"/>
        <end position="19"/>
    </location>
</feature>
<feature type="chain" id="PRO_0000028053" description="Plasminogen">
    <location>
        <begin position="20"/>
        <end position="810"/>
    </location>
</feature>
<feature type="chain" id="PRO_0000028054" description="Plasmin heavy chain A">
    <location>
        <begin position="20"/>
        <end position="580"/>
    </location>
</feature>
<feature type="peptide" id="PRO_0000028055" description="Activation peptide">
    <location>
        <begin position="20"/>
        <end position="97"/>
    </location>
</feature>
<feature type="chain" id="PRO_0000028057" description="Angiostatin">
    <location>
        <begin position="79"/>
        <end position="466"/>
    </location>
</feature>
<feature type="chain" id="PRO_0000028056" description="Plasmin heavy chain A, short form">
    <location>
        <begin position="98"/>
        <end position="580"/>
    </location>
</feature>
<feature type="chain" id="PRO_0000028058" description="Plasmin light chain B">
    <location>
        <begin position="581"/>
        <end position="810"/>
    </location>
</feature>
<feature type="domain" description="PAN" evidence="3">
    <location>
        <begin position="20"/>
        <end position="98"/>
    </location>
</feature>
<feature type="domain" description="Kringle 1" evidence="1">
    <location>
        <begin position="103"/>
        <end position="181"/>
    </location>
</feature>
<feature type="domain" description="Kringle 2" evidence="1">
    <location>
        <begin position="184"/>
        <end position="262"/>
    </location>
</feature>
<feature type="domain" description="Kringle 3" evidence="1">
    <location>
        <begin position="275"/>
        <end position="352"/>
    </location>
</feature>
<feature type="domain" description="Kringle 4" evidence="1">
    <location>
        <begin position="377"/>
        <end position="454"/>
    </location>
</feature>
<feature type="domain" description="Kringle 5" evidence="1">
    <location>
        <begin position="481"/>
        <end position="560"/>
    </location>
</feature>
<feature type="domain" description="Peptidase S1" evidence="2">
    <location>
        <begin position="581"/>
        <end position="808"/>
    </location>
</feature>
<feature type="region of interest" description="Disordered" evidence="4">
    <location>
        <begin position="126"/>
        <end position="145"/>
    </location>
</feature>
<feature type="region of interest" description="Disordered" evidence="4">
    <location>
        <begin position="396"/>
        <end position="416"/>
    </location>
</feature>
<feature type="active site" description="Charge relay system">
    <location>
        <position position="622"/>
    </location>
</feature>
<feature type="active site" description="Charge relay system">
    <location>
        <position position="665"/>
    </location>
</feature>
<feature type="active site" description="Charge relay system">
    <location>
        <position position="760"/>
    </location>
</feature>
<feature type="binding site">
    <location>
        <position position="136"/>
    </location>
    <ligand>
        <name>L-lysine</name>
        <dbReference type="ChEBI" id="CHEBI:32551"/>
    </ligand>
</feature>
<feature type="binding site">
    <location>
        <position position="158"/>
    </location>
    <ligand>
        <name>L-lysine</name>
        <dbReference type="ChEBI" id="CHEBI:32551"/>
    </ligand>
</feature>
<feature type="binding site">
    <location>
        <position position="172"/>
    </location>
    <ligand>
        <name>L-lysine</name>
        <dbReference type="ChEBI" id="CHEBI:32551"/>
    </ligand>
</feature>
<feature type="binding site">
    <location>
        <position position="432"/>
    </location>
    <ligand>
        <name>L-lysine</name>
        <dbReference type="ChEBI" id="CHEBI:32551"/>
    </ligand>
</feature>
<feature type="binding site">
    <location>
        <position position="445"/>
    </location>
    <ligand>
        <name>L-lysine</name>
        <dbReference type="ChEBI" id="CHEBI:32551"/>
    </ligand>
</feature>
<feature type="site" description="Cleavage; by stromelysin-1">
    <location>
        <begin position="78"/>
        <end position="79"/>
    </location>
</feature>
<feature type="site" description="Interacts with fibrin">
    <location>
        <position position="134"/>
    </location>
</feature>
<feature type="site" description="Interacts with fibrin">
    <location>
        <position position="136"/>
    </location>
</feature>
<feature type="site" description="Cleavage; by stromelysin-19">
    <location>
        <begin position="466"/>
        <end position="467"/>
    </location>
</feature>
<feature type="site" description="Cleavage; by plasminogen activator">
    <location>
        <begin position="580"/>
        <end position="581"/>
    </location>
</feature>
<feature type="modified residue" description="Phosphoserine" evidence="41">
    <location>
        <position position="597"/>
    </location>
</feature>
<feature type="modified residue" description="Phosphoserine" evidence="53">
    <location>
        <position position="688"/>
    </location>
</feature>
<feature type="glycosylation site" id="CAR_000016" description="O-linked (GalNAc...) serine" evidence="30 39">
    <location>
        <position position="268"/>
    </location>
</feature>
<feature type="glycosylation site" id="CAR_000017" description="N-linked (GlcNAc...) asparagine" evidence="14 30">
    <location>
        <position position="308"/>
    </location>
</feature>
<feature type="glycosylation site" id="CAR_000018" description="O-linked (GalNAc...) threonine" evidence="30">
    <location>
        <position position="365"/>
    </location>
</feature>
<feature type="disulfide bond">
    <location>
        <begin position="49"/>
        <end position="73"/>
    </location>
</feature>
<feature type="disulfide bond">
    <location>
        <begin position="53"/>
        <end position="61"/>
    </location>
</feature>
<feature type="disulfide bond">
    <location>
        <begin position="103"/>
        <end position="181"/>
    </location>
</feature>
<feature type="disulfide bond">
    <location>
        <begin position="124"/>
        <end position="164"/>
    </location>
</feature>
<feature type="disulfide bond">
    <location>
        <begin position="152"/>
        <end position="176"/>
    </location>
</feature>
<feature type="disulfide bond">
    <location>
        <begin position="185"/>
        <end position="262"/>
    </location>
</feature>
<feature type="disulfide bond">
    <location>
        <begin position="188"/>
        <end position="316"/>
    </location>
</feature>
<feature type="disulfide bond">
    <location>
        <begin position="206"/>
        <end position="245"/>
    </location>
</feature>
<feature type="disulfide bond">
    <location>
        <begin position="234"/>
        <end position="257"/>
    </location>
</feature>
<feature type="disulfide bond">
    <location>
        <begin position="275"/>
        <end position="352"/>
    </location>
</feature>
<feature type="disulfide bond">
    <location>
        <begin position="296"/>
        <end position="335"/>
    </location>
</feature>
<feature type="disulfide bond">
    <location>
        <begin position="324"/>
        <end position="347"/>
    </location>
</feature>
<feature type="disulfide bond">
    <location>
        <begin position="377"/>
        <end position="454"/>
    </location>
</feature>
<feature type="disulfide bond">
    <location>
        <begin position="398"/>
        <end position="437"/>
    </location>
</feature>
<feature type="disulfide bond">
    <location>
        <begin position="426"/>
        <end position="449"/>
    </location>
</feature>
<feature type="disulfide bond">
    <location>
        <begin position="481"/>
        <end position="560"/>
    </location>
</feature>
<feature type="disulfide bond">
    <location>
        <begin position="502"/>
        <end position="543"/>
    </location>
</feature>
<feature type="disulfide bond">
    <location>
        <begin position="531"/>
        <end position="555"/>
    </location>
</feature>
<feature type="disulfide bond" description="Interchain (between A and B chains)" evidence="33 52">
    <location>
        <begin position="567"/>
        <end position="685"/>
    </location>
</feature>
<feature type="disulfide bond" description="Interchain (between A and B chains)" evidence="33 52">
    <location>
        <begin position="577"/>
        <end position="585"/>
    </location>
</feature>
<feature type="disulfide bond" evidence="33 52">
    <location>
        <begin position="607"/>
        <end position="623"/>
    </location>
</feature>
<feature type="disulfide bond" evidence="33 52">
    <location>
        <begin position="699"/>
        <end position="766"/>
    </location>
</feature>
<feature type="disulfide bond" evidence="33 52">
    <location>
        <begin position="729"/>
        <end position="745"/>
    </location>
</feature>
<feature type="disulfide bond" evidence="33 52">
    <location>
        <begin position="756"/>
        <end position="784"/>
    </location>
</feature>
<feature type="sequence variant" id="VAR_018657" description="In PLGD; common mutation; dbSNP:rs73015965." evidence="6">
    <original>K</original>
    <variation>E</variation>
    <location>
        <position position="38"/>
    </location>
</feature>
<feature type="sequence variant" id="VAR_011779" description="In dbSNP:rs1049573.">
    <original>I</original>
    <variation>R</variation>
    <location>
        <position position="46"/>
    </location>
</feature>
<feature type="sequence variant" id="VAR_016287" description="In dbSNP:rs4252070." evidence="45">
    <original>E</original>
    <variation>K</variation>
    <location>
        <position position="57"/>
    </location>
</feature>
<feature type="sequence variant" id="VAR_085811" description="In dbSNP:rs143079629." evidence="29">
    <original>R</original>
    <variation>K</variation>
    <location>
        <position position="89"/>
    </location>
</feature>
<feature type="sequence variant" id="VAR_016288" description="In dbSNP:rs4252186." evidence="45">
    <original>H</original>
    <variation>Q</variation>
    <location>
        <position position="133"/>
    </location>
</feature>
<feature type="sequence variant" id="VAR_018658" description="In PLGD; dbSNP:rs770198253." evidence="6">
    <original>L</original>
    <variation>P</variation>
    <location>
        <position position="147"/>
    </location>
</feature>
<feature type="sequence variant" id="VAR_018659" description="In PLGD; severe type 1 deficiency; dbSNP:rs121918030." evidence="42">
    <original>R</original>
    <variation>H</variation>
    <location>
        <position position="235"/>
    </location>
</feature>
<feature type="sequence variant" id="VAR_016289" description="In dbSNP:rs4252187." evidence="45">
    <original>R</original>
    <variation>H</variation>
    <location>
        <position position="261"/>
    </location>
</feature>
<feature type="sequence variant" id="VAR_085812" description="In HAE4; dbSNP:rs889957249." evidence="24 25 26 27 29 31">
    <original>K</original>
    <variation>E</variation>
    <location>
        <position position="330"/>
    </location>
</feature>
<feature type="sequence variant" id="VAR_006627" description="In PLGD; Nagoya-1; dbSNP:rs121918028." evidence="16">
    <original>V</original>
    <variation>F</variation>
    <location>
        <position position="374"/>
    </location>
</feature>
<feature type="sequence variant" id="VAR_016290" description="In dbSNP:rs4252119." evidence="45">
    <original>R</original>
    <variation>W</variation>
    <location>
        <position position="408"/>
    </location>
</feature>
<feature type="sequence variant" id="VAR_011780" description="In dbSNP:rs1804181.">
    <original>K</original>
    <variation>I</variation>
    <location>
        <position position="453"/>
    </location>
</feature>
<feature type="sequence variant" id="VAR_016291" description="In dbSNP:rs4252125." evidence="21 45 46 47">
    <original>D</original>
    <variation>N</variation>
    <location>
        <position position="472"/>
    </location>
</feature>
<feature type="sequence variant" id="VAR_016292" description="In dbSNP:rs4252128." evidence="45">
    <original>A</original>
    <variation>V</variation>
    <location>
        <position position="494"/>
    </location>
</feature>
<feature type="sequence variant" id="VAR_016293" description="In dbSNP:rs4252129." evidence="45">
    <original>R</original>
    <variation>W</variation>
    <location>
        <position position="523"/>
    </location>
</feature>
<feature type="sequence variant" id="VAR_018660" description="In PLGD; dbSNP:rs1778047240." evidence="6">
    <original>R</original>
    <variation>H</variation>
    <location>
        <position position="532"/>
    </location>
</feature>
<feature type="sequence variant" id="VAR_006628" description="In PLGD; risk factor for thrombosis; dbSNP:rs121918029." evidence="38">
    <original>S</original>
    <variation>P</variation>
    <location>
        <position position="591"/>
    </location>
</feature>
<feature type="sequence variant" id="VAR_006629" description="In PLGD; type 2 plasminogen deficiency; decreased activity; Nagoya-2/Tochigi/Kagoshima; risk factor for thrombosis; dbSNP:rs121918027." evidence="9 16 35 36">
    <original>A</original>
    <variation>T</variation>
    <location>
        <position position="620"/>
    </location>
</feature>
<feature type="sequence variant" id="VAR_031213" description="In dbSNP:rs17857492." evidence="12">
    <original>V</original>
    <variation>D</variation>
    <location>
        <position position="676"/>
    </location>
</feature>
<feature type="sequence variant" id="VAR_085813" description="In HAE4; uncertain significance; dbSNP:rs1582955358." evidence="29">
    <original>V</original>
    <variation>E</variation>
    <location>
        <position position="728"/>
    </location>
</feature>
<feature type="sequence variant" id="VAR_006630" description="In PLGD; Kanagawa-1; 50% activity; dbSNP:rs121918033." evidence="44">
    <original>G</original>
    <variation>R</variation>
    <location>
        <position position="751"/>
    </location>
</feature>
<feature type="mutagenesis site" description="Proteolytically cleaved, but abolishes plasmin activity and cell detachment. Prevents invasion of the mosquito vector midgut by parasite P.falciparum ookinetes." evidence="10 18">
    <original>S</original>
    <variation>A</variation>
    <location>
        <position position="741"/>
    </location>
</feature>
<feature type="sequence conflict" description="In Ref. 8; AA sequence." evidence="50" ref="8">
    <original>A</original>
    <variation>AQ</variation>
    <location>
        <position position="50"/>
    </location>
</feature>
<feature type="sequence conflict" description="In Ref. 7; AA sequence and 8; AA sequence." evidence="50" ref="7 8">
    <original>Q</original>
    <variation>E</variation>
    <location>
        <position position="72"/>
    </location>
</feature>
<feature type="sequence conflict" description="In Ref. 7; AA sequence and 8; AA sequence." evidence="50" ref="7 8">
    <location>
        <position position="86"/>
    </location>
</feature>
<feature type="sequence conflict" description="In Ref. 7; AA sequence and 9; AA sequence." evidence="50" ref="7 9">
    <original>Q</original>
    <variation>E</variation>
    <location>
        <position position="361"/>
    </location>
</feature>
<feature type="sequence conflict" description="In Ref. 3; AAA36451." evidence="50" ref="3">
    <original>I</original>
    <variation>V</variation>
    <location>
        <position position="701"/>
    </location>
</feature>
<feature type="strand" evidence="70">
    <location>
        <begin position="25"/>
        <end position="33"/>
    </location>
</feature>
<feature type="strand" evidence="70">
    <location>
        <begin position="36"/>
        <end position="42"/>
    </location>
</feature>
<feature type="helix" evidence="70">
    <location>
        <begin position="46"/>
        <end position="55"/>
    </location>
</feature>
<feature type="strand" evidence="70">
    <location>
        <begin position="57"/>
        <end position="59"/>
    </location>
</feature>
<feature type="strand" evidence="70">
    <location>
        <begin position="63"/>
        <end position="67"/>
    </location>
</feature>
<feature type="turn" evidence="70">
    <location>
        <begin position="68"/>
        <end position="71"/>
    </location>
</feature>
<feature type="strand" evidence="70">
    <location>
        <begin position="72"/>
        <end position="77"/>
    </location>
</feature>
<feature type="turn" evidence="70">
    <location>
        <begin position="80"/>
        <end position="82"/>
    </location>
</feature>
<feature type="strand" evidence="70">
    <location>
        <begin position="85"/>
        <end position="96"/>
    </location>
</feature>
<feature type="helix" evidence="70">
    <location>
        <begin position="97"/>
        <end position="99"/>
    </location>
</feature>
<feature type="strand" evidence="60">
    <location>
        <begin position="102"/>
        <end position="104"/>
    </location>
</feature>
<feature type="strand" evidence="57">
    <location>
        <begin position="105"/>
        <end position="110"/>
    </location>
</feature>
<feature type="helix" evidence="57">
    <location>
        <begin position="113"/>
        <end position="115"/>
    </location>
</feature>
<feature type="turn" evidence="57">
    <location>
        <begin position="119"/>
        <end position="121"/>
    </location>
</feature>
<feature type="strand" evidence="60">
    <location>
        <begin position="131"/>
        <end position="133"/>
    </location>
</feature>
<feature type="turn" evidence="60">
    <location>
        <begin position="139"/>
        <end position="141"/>
    </location>
</feature>
<feature type="turn" evidence="69">
    <location>
        <begin position="143"/>
        <end position="146"/>
    </location>
</feature>
<feature type="strand" evidence="57">
    <location>
        <begin position="148"/>
        <end position="150"/>
    </location>
</feature>
<feature type="strand" evidence="58">
    <location>
        <begin position="155"/>
        <end position="157"/>
    </location>
</feature>
<feature type="strand" evidence="60">
    <location>
        <begin position="163"/>
        <end position="167"/>
    </location>
</feature>
<feature type="strand" evidence="60">
    <location>
        <begin position="172"/>
        <end position="175"/>
    </location>
</feature>
<feature type="strand" evidence="65">
    <location>
        <begin position="180"/>
        <end position="182"/>
    </location>
</feature>
<feature type="strand" evidence="73">
    <location>
        <begin position="184"/>
        <end position="190"/>
    </location>
</feature>
<feature type="strand" evidence="59">
    <location>
        <begin position="205"/>
        <end position="207"/>
    </location>
</feature>
<feature type="strand" evidence="54">
    <location>
        <begin position="209"/>
        <end position="211"/>
    </location>
</feature>
<feature type="strand" evidence="73">
    <location>
        <begin position="213"/>
        <end position="215"/>
    </location>
</feature>
<feature type="helix" evidence="73">
    <location>
        <begin position="221"/>
        <end position="223"/>
    </location>
</feature>
<feature type="helix" evidence="73">
    <location>
        <begin position="225"/>
        <end position="227"/>
    </location>
</feature>
<feature type="strand" evidence="60">
    <location>
        <begin position="237"/>
        <end position="239"/>
    </location>
</feature>
<feature type="strand" evidence="73">
    <location>
        <begin position="244"/>
        <end position="248"/>
    </location>
</feature>
<feature type="strand" evidence="73">
    <location>
        <begin position="254"/>
        <end position="256"/>
    </location>
</feature>
<feature type="strand" evidence="60">
    <location>
        <begin position="273"/>
        <end position="276"/>
    </location>
</feature>
<feature type="strand" evidence="67">
    <location>
        <begin position="281"/>
        <end position="283"/>
    </location>
</feature>
<feature type="strand" evidence="67">
    <location>
        <begin position="291"/>
        <end position="293"/>
    </location>
</feature>
<feature type="strand" evidence="70">
    <location>
        <begin position="295"/>
        <end position="297"/>
    </location>
</feature>
<feature type="strand" evidence="67">
    <location>
        <begin position="303"/>
        <end position="305"/>
    </location>
</feature>
<feature type="turn" evidence="60">
    <location>
        <begin position="311"/>
        <end position="313"/>
    </location>
</feature>
<feature type="helix" evidence="60">
    <location>
        <begin position="315"/>
        <end position="317"/>
    </location>
</feature>
<feature type="strand" evidence="60">
    <location>
        <begin position="334"/>
        <end position="339"/>
    </location>
</feature>
<feature type="strand" evidence="60">
    <location>
        <begin position="343"/>
        <end position="346"/>
    </location>
</feature>
<feature type="strand" evidence="70">
    <location>
        <begin position="377"/>
        <end position="379"/>
    </location>
</feature>
<feature type="strand" evidence="70">
    <location>
        <begin position="382"/>
        <end position="384"/>
    </location>
</feature>
<feature type="strand" evidence="62">
    <location>
        <begin position="405"/>
        <end position="407"/>
    </location>
</feature>
<feature type="turn" evidence="61">
    <location>
        <begin position="413"/>
        <end position="415"/>
    </location>
</feature>
<feature type="turn" evidence="68">
    <location>
        <begin position="417"/>
        <end position="419"/>
    </location>
</feature>
<feature type="strand" evidence="63">
    <location>
        <begin position="429"/>
        <end position="431"/>
    </location>
</feature>
<feature type="strand" evidence="61">
    <location>
        <begin position="436"/>
        <end position="441"/>
    </location>
</feature>
<feature type="strand" evidence="61">
    <location>
        <begin position="446"/>
        <end position="450"/>
    </location>
</feature>
<feature type="strand" evidence="70">
    <location>
        <begin position="460"/>
        <end position="462"/>
    </location>
</feature>
<feature type="strand" evidence="66">
    <location>
        <begin position="481"/>
        <end position="483"/>
    </location>
</feature>
<feature type="strand" evidence="70">
    <location>
        <begin position="487"/>
        <end position="489"/>
    </location>
</feature>
<feature type="strand" evidence="71">
    <location>
        <begin position="509"/>
        <end position="511"/>
    </location>
</feature>
<feature type="strand" evidence="71">
    <location>
        <begin position="514"/>
        <end position="516"/>
    </location>
</feature>
<feature type="turn" evidence="71">
    <location>
        <begin position="518"/>
        <end position="520"/>
    </location>
</feature>
<feature type="turn" evidence="70">
    <location>
        <begin position="522"/>
        <end position="525"/>
    </location>
</feature>
<feature type="strand" evidence="71">
    <location>
        <begin position="542"/>
        <end position="546"/>
    </location>
</feature>
<feature type="strand" evidence="71">
    <location>
        <begin position="552"/>
        <end position="554"/>
    </location>
</feature>
<feature type="strand" evidence="72">
    <location>
        <begin position="582"/>
        <end position="586"/>
    </location>
</feature>
<feature type="strand" evidence="72">
    <location>
        <begin position="595"/>
        <end position="600"/>
    </location>
</feature>
<feature type="strand" evidence="72">
    <location>
        <begin position="605"/>
        <end position="613"/>
    </location>
</feature>
<feature type="strand" evidence="72">
    <location>
        <begin position="616"/>
        <end position="619"/>
    </location>
</feature>
<feature type="helix" evidence="72">
    <location>
        <begin position="621"/>
        <end position="623"/>
    </location>
</feature>
<feature type="turn" evidence="72">
    <location>
        <begin position="624"/>
        <end position="626"/>
    </location>
</feature>
<feature type="helix" evidence="72">
    <location>
        <begin position="630"/>
        <end position="632"/>
    </location>
</feature>
<feature type="strand" evidence="72">
    <location>
        <begin position="633"/>
        <end position="638"/>
    </location>
</feature>
<feature type="strand" evidence="72">
    <location>
        <begin position="640"/>
        <end position="644"/>
    </location>
</feature>
<feature type="strand" evidence="72">
    <location>
        <begin position="650"/>
        <end position="659"/>
    </location>
</feature>
<feature type="turn" evidence="64">
    <location>
        <begin position="661"/>
        <end position="663"/>
    </location>
</feature>
<feature type="strand" evidence="72">
    <location>
        <begin position="667"/>
        <end position="673"/>
    </location>
</feature>
<feature type="strand" evidence="72">
    <location>
        <begin position="698"/>
        <end position="704"/>
    </location>
</feature>
<feature type="strand" evidence="74">
    <location>
        <begin position="708"/>
        <end position="711"/>
    </location>
</feature>
<feature type="strand" evidence="72">
    <location>
        <begin position="717"/>
        <end position="724"/>
    </location>
</feature>
<feature type="helix" evidence="72">
    <location>
        <begin position="726"/>
        <end position="729"/>
    </location>
</feature>
<feature type="turn" evidence="72">
    <location>
        <begin position="732"/>
        <end position="737"/>
    </location>
</feature>
<feature type="strand" evidence="72">
    <location>
        <begin position="743"/>
        <end position="746"/>
    </location>
</feature>
<feature type="strand" evidence="56">
    <location>
        <begin position="749"/>
        <end position="751"/>
    </location>
</feature>
<feature type="strand" evidence="55">
    <location>
        <begin position="752"/>
        <end position="754"/>
    </location>
</feature>
<feature type="helix" evidence="75">
    <location>
        <begin position="757"/>
        <end position="759"/>
    </location>
</feature>
<feature type="strand" evidence="72">
    <location>
        <begin position="763"/>
        <end position="768"/>
    </location>
</feature>
<feature type="strand" evidence="72">
    <location>
        <begin position="771"/>
        <end position="780"/>
    </location>
</feature>
<feature type="strand" evidence="72">
    <location>
        <begin position="782"/>
        <end position="785"/>
    </location>
</feature>
<feature type="strand" evidence="72">
    <location>
        <begin position="791"/>
        <end position="795"/>
    </location>
</feature>
<feature type="helix" evidence="72">
    <location>
        <begin position="796"/>
        <end position="799"/>
    </location>
</feature>
<feature type="helix" evidence="72">
    <location>
        <begin position="800"/>
        <end position="809"/>
    </location>
</feature>
<dbReference type="EC" id="3.4.21.7" evidence="17 37"/>
<dbReference type="EMBL" id="M34276">
    <property type="protein sequence ID" value="AAA60113.1"/>
    <property type="molecule type" value="Genomic_DNA"/>
</dbReference>
<dbReference type="EMBL" id="M33272">
    <property type="protein sequence ID" value="AAA60113.1"/>
    <property type="status" value="JOINED"/>
    <property type="molecule type" value="Genomic_DNA"/>
</dbReference>
<dbReference type="EMBL" id="M33274">
    <property type="protein sequence ID" value="AAA60113.1"/>
    <property type="status" value="JOINED"/>
    <property type="molecule type" value="Genomic_DNA"/>
</dbReference>
<dbReference type="EMBL" id="M33275">
    <property type="protein sequence ID" value="AAA60113.1"/>
    <property type="status" value="JOINED"/>
    <property type="molecule type" value="Genomic_DNA"/>
</dbReference>
<dbReference type="EMBL" id="M33278">
    <property type="protein sequence ID" value="AAA60113.1"/>
    <property type="status" value="JOINED"/>
    <property type="molecule type" value="Genomic_DNA"/>
</dbReference>
<dbReference type="EMBL" id="M33279">
    <property type="protein sequence ID" value="AAA60113.1"/>
    <property type="status" value="JOINED"/>
    <property type="molecule type" value="Genomic_DNA"/>
</dbReference>
<dbReference type="EMBL" id="M33280">
    <property type="protein sequence ID" value="AAA60113.1"/>
    <property type="status" value="JOINED"/>
    <property type="molecule type" value="Genomic_DNA"/>
</dbReference>
<dbReference type="EMBL" id="M33282">
    <property type="protein sequence ID" value="AAA60113.1"/>
    <property type="status" value="JOINED"/>
    <property type="molecule type" value="Genomic_DNA"/>
</dbReference>
<dbReference type="EMBL" id="M33283">
    <property type="protein sequence ID" value="AAA60113.1"/>
    <property type="status" value="JOINED"/>
    <property type="molecule type" value="Genomic_DNA"/>
</dbReference>
<dbReference type="EMBL" id="M33284">
    <property type="protein sequence ID" value="AAA60113.1"/>
    <property type="status" value="JOINED"/>
    <property type="molecule type" value="Genomic_DNA"/>
</dbReference>
<dbReference type="EMBL" id="M33285">
    <property type="protein sequence ID" value="AAA60113.1"/>
    <property type="status" value="JOINED"/>
    <property type="molecule type" value="Genomic_DNA"/>
</dbReference>
<dbReference type="EMBL" id="M33286">
    <property type="protein sequence ID" value="AAA60113.1"/>
    <property type="status" value="JOINED"/>
    <property type="molecule type" value="Genomic_DNA"/>
</dbReference>
<dbReference type="EMBL" id="M33287">
    <property type="protein sequence ID" value="AAA60113.1"/>
    <property type="status" value="JOINED"/>
    <property type="molecule type" value="Genomic_DNA"/>
</dbReference>
<dbReference type="EMBL" id="M33288">
    <property type="protein sequence ID" value="AAA60113.1"/>
    <property type="status" value="JOINED"/>
    <property type="molecule type" value="Genomic_DNA"/>
</dbReference>
<dbReference type="EMBL" id="M33289">
    <property type="protein sequence ID" value="AAA60113.1"/>
    <property type="status" value="JOINED"/>
    <property type="molecule type" value="Genomic_DNA"/>
</dbReference>
<dbReference type="EMBL" id="M33290">
    <property type="protein sequence ID" value="AAA60113.1"/>
    <property type="status" value="JOINED"/>
    <property type="molecule type" value="Genomic_DNA"/>
</dbReference>
<dbReference type="EMBL" id="M34272">
    <property type="protein sequence ID" value="AAA60113.1"/>
    <property type="status" value="JOINED"/>
    <property type="molecule type" value="Genomic_DNA"/>
</dbReference>
<dbReference type="EMBL" id="M34273">
    <property type="protein sequence ID" value="AAA60113.1"/>
    <property type="status" value="JOINED"/>
    <property type="molecule type" value="Genomic_DNA"/>
</dbReference>
<dbReference type="EMBL" id="M34275">
    <property type="protein sequence ID" value="AAA60113.1"/>
    <property type="status" value="JOINED"/>
    <property type="molecule type" value="Genomic_DNA"/>
</dbReference>
<dbReference type="EMBL" id="X05199">
    <property type="protein sequence ID" value="CAA28831.1"/>
    <property type="molecule type" value="mRNA"/>
</dbReference>
<dbReference type="EMBL" id="M74220">
    <property type="protein sequence ID" value="AAA36451.1"/>
    <property type="molecule type" value="mRNA"/>
</dbReference>
<dbReference type="EMBL" id="AY192161">
    <property type="protein sequence ID" value="AAN85555.1"/>
    <property type="molecule type" value="Genomic_DNA"/>
</dbReference>
<dbReference type="EMBL" id="AL109933">
    <property type="status" value="NOT_ANNOTATED_CDS"/>
    <property type="molecule type" value="Genomic_DNA"/>
</dbReference>
<dbReference type="EMBL" id="BC060513">
    <property type="protein sequence ID" value="AAH60513.1"/>
    <property type="molecule type" value="mRNA"/>
</dbReference>
<dbReference type="EMBL" id="K02922">
    <property type="protein sequence ID" value="AAA60124.1"/>
    <property type="molecule type" value="mRNA"/>
</dbReference>
<dbReference type="CCDS" id="CCDS5279.1"/>
<dbReference type="PIR" id="A35229">
    <property type="entry name" value="PLHU"/>
</dbReference>
<dbReference type="RefSeq" id="NP_000292.1">
    <property type="nucleotide sequence ID" value="NM_000301.5"/>
</dbReference>
<dbReference type="PDB" id="1B2I">
    <property type="method" value="NMR"/>
    <property type="chains" value="A=181-263"/>
</dbReference>
<dbReference type="PDB" id="1BML">
    <property type="method" value="X-ray"/>
    <property type="resolution" value="2.90 A"/>
    <property type="chains" value="A/B=561-810"/>
</dbReference>
<dbReference type="PDB" id="1BUI">
    <property type="method" value="X-ray"/>
    <property type="resolution" value="2.65 A"/>
    <property type="chains" value="A/B=561-810"/>
</dbReference>
<dbReference type="PDB" id="1CEA">
    <property type="method" value="X-ray"/>
    <property type="resolution" value="2.06 A"/>
    <property type="chains" value="A/B=100-187"/>
</dbReference>
<dbReference type="PDB" id="1CEB">
    <property type="method" value="X-ray"/>
    <property type="resolution" value="2.07 A"/>
    <property type="chains" value="A/B=100-187"/>
</dbReference>
<dbReference type="PDB" id="1DDJ">
    <property type="method" value="X-ray"/>
    <property type="resolution" value="2.00 A"/>
    <property type="chains" value="A/B/C/D=564-810"/>
</dbReference>
<dbReference type="PDB" id="1HPJ">
    <property type="method" value="NMR"/>
    <property type="chains" value="A=103-181"/>
</dbReference>
<dbReference type="PDB" id="1HPK">
    <property type="method" value="NMR"/>
    <property type="chains" value="A=103-181"/>
</dbReference>
<dbReference type="PDB" id="1I5K">
    <property type="method" value="X-ray"/>
    <property type="resolution" value="2.70 A"/>
    <property type="chains" value="A/B=184-262"/>
</dbReference>
<dbReference type="PDB" id="1KI0">
    <property type="method" value="X-ray"/>
    <property type="resolution" value="1.75 A"/>
    <property type="chains" value="A=100-352"/>
</dbReference>
<dbReference type="PDB" id="1KRN">
    <property type="method" value="X-ray"/>
    <property type="resolution" value="1.67 A"/>
    <property type="chains" value="A=374-461"/>
</dbReference>
<dbReference type="PDB" id="1L4D">
    <property type="method" value="X-ray"/>
    <property type="resolution" value="2.30 A"/>
    <property type="chains" value="A=562-810"/>
</dbReference>
<dbReference type="PDB" id="1L4Z">
    <property type="method" value="X-ray"/>
    <property type="resolution" value="2.80 A"/>
    <property type="chains" value="A=563-810"/>
</dbReference>
<dbReference type="PDB" id="1PK4">
    <property type="method" value="X-ray"/>
    <property type="resolution" value="1.90 A"/>
    <property type="chains" value="A=376-454"/>
</dbReference>
<dbReference type="PDB" id="1PKR">
    <property type="method" value="X-ray"/>
    <property type="resolution" value="2.48 A"/>
    <property type="chains" value="A=101-181"/>
</dbReference>
<dbReference type="PDB" id="1PMK">
    <property type="method" value="X-ray"/>
    <property type="resolution" value="2.25 A"/>
    <property type="chains" value="A/B=374-461"/>
</dbReference>
<dbReference type="PDB" id="1QRZ">
    <property type="method" value="X-ray"/>
    <property type="resolution" value="2.00 A"/>
    <property type="chains" value="A/B/C/D=565-810"/>
</dbReference>
<dbReference type="PDB" id="1RJX">
    <property type="method" value="X-ray"/>
    <property type="resolution" value="2.30 A"/>
    <property type="chains" value="B=564-810"/>
</dbReference>
<dbReference type="PDB" id="2DOH">
    <property type="method" value="X-ray"/>
    <property type="resolution" value="2.30 A"/>
    <property type="chains" value="X=100-333"/>
</dbReference>
<dbReference type="PDB" id="2DOI">
    <property type="method" value="X-ray"/>
    <property type="resolution" value="3.10 A"/>
    <property type="chains" value="A/X=100-333"/>
</dbReference>
<dbReference type="PDB" id="2KNF">
    <property type="method" value="NMR"/>
    <property type="chains" value="A=480-562"/>
</dbReference>
<dbReference type="PDB" id="2L0S">
    <property type="method" value="NMR"/>
    <property type="chains" value="A=272-354"/>
</dbReference>
<dbReference type="PDB" id="2PK4">
    <property type="method" value="X-ray"/>
    <property type="resolution" value="2.25 A"/>
    <property type="chains" value="A=375-454"/>
</dbReference>
<dbReference type="PDB" id="3UIR">
    <property type="method" value="X-ray"/>
    <property type="resolution" value="2.78 A"/>
    <property type="chains" value="A/B=564-810"/>
</dbReference>
<dbReference type="PDB" id="4A5T">
    <property type="method" value="X-ray"/>
    <property type="resolution" value="3.49 A"/>
    <property type="chains" value="S=20-810"/>
</dbReference>
<dbReference type="PDB" id="4CIK">
    <property type="method" value="X-ray"/>
    <property type="resolution" value="1.78 A"/>
    <property type="chains" value="A=101-181"/>
</dbReference>
<dbReference type="PDB" id="4DCB">
    <property type="method" value="X-ray"/>
    <property type="resolution" value="2.03 A"/>
    <property type="chains" value="F=576-585"/>
</dbReference>
<dbReference type="PDB" id="4DUR">
    <property type="method" value="X-ray"/>
    <property type="resolution" value="2.45 A"/>
    <property type="chains" value="A/B=20-810"/>
</dbReference>
<dbReference type="PDB" id="4DUU">
    <property type="method" value="X-ray"/>
    <property type="resolution" value="5.20 A"/>
    <property type="chains" value="A=20-810"/>
</dbReference>
<dbReference type="PDB" id="5HPG">
    <property type="method" value="X-ray"/>
    <property type="resolution" value="1.66 A"/>
    <property type="chains" value="A/B=480-563"/>
</dbReference>
<dbReference type="PDB" id="5UGD">
    <property type="method" value="X-ray"/>
    <property type="resolution" value="1.38 A"/>
    <property type="chains" value="A=562-810"/>
</dbReference>
<dbReference type="PDB" id="5UGG">
    <property type="method" value="X-ray"/>
    <property type="resolution" value="1.20 A"/>
    <property type="chains" value="A=562-810"/>
</dbReference>
<dbReference type="PDB" id="6D3X">
    <property type="method" value="X-ray"/>
    <property type="resolution" value="1.80 A"/>
    <property type="chains" value="A/B=565-810"/>
</dbReference>
<dbReference type="PDB" id="6D3Y">
    <property type="method" value="X-ray"/>
    <property type="resolution" value="1.32 A"/>
    <property type="chains" value="A=564-810"/>
</dbReference>
<dbReference type="PDB" id="6D3Z">
    <property type="method" value="X-ray"/>
    <property type="resolution" value="2.00 A"/>
    <property type="chains" value="A=565-810"/>
</dbReference>
<dbReference type="PDB" id="6D40">
    <property type="method" value="X-ray"/>
    <property type="resolution" value="1.43 A"/>
    <property type="chains" value="A=563-810"/>
</dbReference>
<dbReference type="PDB" id="6OG4">
    <property type="method" value="X-ray"/>
    <property type="resolution" value="1.70 A"/>
    <property type="chains" value="A/B=183-264"/>
</dbReference>
<dbReference type="PDB" id="6OQJ">
    <property type="method" value="NMR"/>
    <property type="chains" value="A=179-262"/>
</dbReference>
<dbReference type="PDB" id="6OQK">
    <property type="method" value="NMR"/>
    <property type="chains" value="A=179-262"/>
</dbReference>
<dbReference type="PDB" id="6Q1U">
    <property type="method" value="X-ray"/>
    <property type="resolution" value="2.35 A"/>
    <property type="chains" value="A/B=562-810"/>
</dbReference>
<dbReference type="PDB" id="6UZ4">
    <property type="method" value="NMR"/>
    <property type="chains" value="A=185-262"/>
</dbReference>
<dbReference type="PDB" id="6UZ5">
    <property type="method" value="NMR"/>
    <property type="chains" value="A=185-262"/>
</dbReference>
<dbReference type="PDB" id="7E50">
    <property type="method" value="X-ray"/>
    <property type="resolution" value="1.95 A"/>
    <property type="chains" value="B=564-810"/>
</dbReference>
<dbReference type="PDB" id="7THS">
    <property type="method" value="X-ray"/>
    <property type="resolution" value="1.80 A"/>
    <property type="chains" value="A/B=561-810"/>
</dbReference>
<dbReference type="PDB" id="7UAH">
    <property type="method" value="X-ray"/>
    <property type="resolution" value="1.57 A"/>
    <property type="chains" value="A/B=561-810"/>
</dbReference>
<dbReference type="PDB" id="8F7U">
    <property type="method" value="X-ray"/>
    <property type="resolution" value="1.47 A"/>
    <property type="chains" value="A/B=561-810"/>
</dbReference>
<dbReference type="PDB" id="8F7V">
    <property type="method" value="X-ray"/>
    <property type="resolution" value="1.65 A"/>
    <property type="chains" value="A/B=561-810"/>
</dbReference>
<dbReference type="PDB" id="8UQ6">
    <property type="method" value="EM"/>
    <property type="resolution" value="3.60 A"/>
    <property type="chains" value="A=20-810"/>
</dbReference>
<dbReference type="PDB" id="9AZK">
    <property type="method" value="X-ray"/>
    <property type="resolution" value="2.10 A"/>
    <property type="chains" value="A/B/C/D/E/F=561-810"/>
</dbReference>
<dbReference type="PDBsum" id="1B2I"/>
<dbReference type="PDBsum" id="1BML"/>
<dbReference type="PDBsum" id="1BUI"/>
<dbReference type="PDBsum" id="1CEA"/>
<dbReference type="PDBsum" id="1CEB"/>
<dbReference type="PDBsum" id="1DDJ"/>
<dbReference type="PDBsum" id="1HPJ"/>
<dbReference type="PDBsum" id="1HPK"/>
<dbReference type="PDBsum" id="1I5K"/>
<dbReference type="PDBsum" id="1KI0"/>
<dbReference type="PDBsum" id="1KRN"/>
<dbReference type="PDBsum" id="1L4D"/>
<dbReference type="PDBsum" id="1L4Z"/>
<dbReference type="PDBsum" id="1PK4"/>
<dbReference type="PDBsum" id="1PKR"/>
<dbReference type="PDBsum" id="1PMK"/>
<dbReference type="PDBsum" id="1QRZ"/>
<dbReference type="PDBsum" id="1RJX"/>
<dbReference type="PDBsum" id="2DOH"/>
<dbReference type="PDBsum" id="2DOI"/>
<dbReference type="PDBsum" id="2KNF"/>
<dbReference type="PDBsum" id="2L0S"/>
<dbReference type="PDBsum" id="2PK4"/>
<dbReference type="PDBsum" id="3UIR"/>
<dbReference type="PDBsum" id="4A5T"/>
<dbReference type="PDBsum" id="4CIK"/>
<dbReference type="PDBsum" id="4DCB"/>
<dbReference type="PDBsum" id="4DUR"/>
<dbReference type="PDBsum" id="4DUU"/>
<dbReference type="PDBsum" id="5HPG"/>
<dbReference type="PDBsum" id="5UGD"/>
<dbReference type="PDBsum" id="5UGG"/>
<dbReference type="PDBsum" id="6D3X"/>
<dbReference type="PDBsum" id="6D3Y"/>
<dbReference type="PDBsum" id="6D3Z"/>
<dbReference type="PDBsum" id="6D40"/>
<dbReference type="PDBsum" id="6OG4"/>
<dbReference type="PDBsum" id="6OQJ"/>
<dbReference type="PDBsum" id="6OQK"/>
<dbReference type="PDBsum" id="6Q1U"/>
<dbReference type="PDBsum" id="6UZ4"/>
<dbReference type="PDBsum" id="6UZ5"/>
<dbReference type="PDBsum" id="7E50"/>
<dbReference type="PDBsum" id="7THS"/>
<dbReference type="PDBsum" id="7UAH"/>
<dbReference type="PDBsum" id="8F7U"/>
<dbReference type="PDBsum" id="8F7V"/>
<dbReference type="PDBsum" id="8UQ6"/>
<dbReference type="PDBsum" id="9AZK"/>
<dbReference type="EMDB" id="EMD-42462"/>
<dbReference type="SMR" id="P00747"/>
<dbReference type="BioGRID" id="111356">
    <property type="interactions" value="77"/>
</dbReference>
<dbReference type="CORUM" id="P00747"/>
<dbReference type="FunCoup" id="P00747">
    <property type="interactions" value="572"/>
</dbReference>
<dbReference type="IntAct" id="P00747">
    <property type="interactions" value="73"/>
</dbReference>
<dbReference type="MINT" id="P00747"/>
<dbReference type="STRING" id="9606.ENSP00000308938"/>
<dbReference type="BindingDB" id="P00747"/>
<dbReference type="ChEMBL" id="CHEMBL1801"/>
<dbReference type="DrugBank" id="DB02463">
    <property type="generic name" value="2-(2-Hydroxy-Phenyl)-1h-Indole-5-Carboxamidine"/>
</dbReference>
<dbReference type="DrugBank" id="DB00009">
    <property type="generic name" value="Alteplase"/>
</dbReference>
<dbReference type="DrugBank" id="DB00513">
    <property type="generic name" value="Aminocaproic acid"/>
</dbReference>
<dbReference type="DrugBank" id="DB00029">
    <property type="generic name" value="Anistreplase"/>
</dbReference>
<dbReference type="DrugBank" id="DB06692">
    <property type="generic name" value="Aprotinin"/>
</dbReference>
<dbReference type="DrugBank" id="DB03709">
    <property type="generic name" value="Bicine"/>
</dbReference>
<dbReference type="DrugBank" id="DB09130">
    <property type="generic name" value="Copper"/>
</dbReference>
<dbReference type="DrugBank" id="DB04925">
    <property type="generic name" value="Desmoteplase"/>
</dbReference>
<dbReference type="DrugBank" id="DB12831">
    <property type="generic name" value="Gabexate"/>
</dbReference>
<dbReference type="DrugBank" id="DB13616">
    <property type="generic name" value="Melagatran"/>
</dbReference>
<dbReference type="DrugBank" id="DB00243">
    <property type="generic name" value="Ranolazine"/>
</dbReference>
<dbReference type="DrugBank" id="DB00015">
    <property type="generic name" value="Reteplase"/>
</dbReference>
<dbReference type="DrugBank" id="DB00086">
    <property type="generic name" value="Streptokinase"/>
</dbReference>
<dbReference type="DrugBank" id="DB00031">
    <property type="generic name" value="Tenecteplase"/>
</dbReference>
<dbReference type="DrugBank" id="DB00302">
    <property type="generic name" value="Tranexamic acid"/>
</dbReference>
<dbReference type="DrugBank" id="DB00013">
    <property type="generic name" value="Urokinase"/>
</dbReference>
<dbReference type="DrugCentral" id="P00747"/>
<dbReference type="GuidetoPHARMACOLOGY" id="2394"/>
<dbReference type="MEROPS" id="S01.233"/>
<dbReference type="GlyConnect" id="502">
    <property type="glycosylation" value="33 N-Linked glycans (3 sites), 2 O-Linked glycans (2 sites)"/>
</dbReference>
<dbReference type="GlyCosmos" id="P00747">
    <property type="glycosylation" value="15 sites, 64 glycans"/>
</dbReference>
<dbReference type="GlyGen" id="P00747">
    <property type="glycosylation" value="19 sites, 53 N-linked glycans (4 sites), 13 O-linked glycans (13 sites)"/>
</dbReference>
<dbReference type="iPTMnet" id="P00747"/>
<dbReference type="PhosphoSitePlus" id="P00747"/>
<dbReference type="BioMuta" id="PLG"/>
<dbReference type="DMDM" id="130316"/>
<dbReference type="CPTAC" id="non-CPTAC-1151"/>
<dbReference type="jPOST" id="P00747"/>
<dbReference type="MassIVE" id="P00747"/>
<dbReference type="PaxDb" id="9606-ENSP00000308938"/>
<dbReference type="PeptideAtlas" id="P00747"/>
<dbReference type="ProteomicsDB" id="51277"/>
<dbReference type="Pumba" id="P00747"/>
<dbReference type="Antibodypedia" id="3285">
    <property type="antibodies" value="1307 antibodies from 43 providers"/>
</dbReference>
<dbReference type="DNASU" id="5340"/>
<dbReference type="Ensembl" id="ENST00000308192.14">
    <property type="protein sequence ID" value="ENSP00000308938.9"/>
    <property type="gene ID" value="ENSG00000122194.20"/>
</dbReference>
<dbReference type="GeneID" id="5340"/>
<dbReference type="KEGG" id="hsa:5340"/>
<dbReference type="MANE-Select" id="ENST00000308192.14">
    <property type="protein sequence ID" value="ENSP00000308938.9"/>
    <property type="RefSeq nucleotide sequence ID" value="NM_000301.5"/>
    <property type="RefSeq protein sequence ID" value="NP_000292.1"/>
</dbReference>
<dbReference type="UCSC" id="uc003qtm.5">
    <property type="organism name" value="human"/>
</dbReference>
<dbReference type="AGR" id="HGNC:9071"/>
<dbReference type="CTD" id="5340"/>
<dbReference type="DisGeNET" id="5340"/>
<dbReference type="GeneCards" id="PLG"/>
<dbReference type="HGNC" id="HGNC:9071">
    <property type="gene designation" value="PLG"/>
</dbReference>
<dbReference type="HPA" id="ENSG00000122194">
    <property type="expression patterns" value="Tissue enriched (liver)"/>
</dbReference>
<dbReference type="MalaCards" id="PLG"/>
<dbReference type="MIM" id="173350">
    <property type="type" value="gene"/>
</dbReference>
<dbReference type="MIM" id="217090">
    <property type="type" value="phenotype"/>
</dbReference>
<dbReference type="MIM" id="619360">
    <property type="type" value="phenotype"/>
</dbReference>
<dbReference type="neXtProt" id="NX_P00747"/>
<dbReference type="OpenTargets" id="ENSG00000122194"/>
<dbReference type="Orphanet" id="722">
    <property type="disease" value="Hypoplasminogenemia"/>
</dbReference>
<dbReference type="Orphanet" id="537072">
    <property type="disease" value="PLG-related hereditary angioedema with normal C1Inh"/>
</dbReference>
<dbReference type="PharmGKB" id="PA33405"/>
<dbReference type="VEuPathDB" id="HostDB:ENSG00000122194"/>
<dbReference type="eggNOG" id="ENOG502QVNP">
    <property type="taxonomic scope" value="Eukaryota"/>
</dbReference>
<dbReference type="GeneTree" id="ENSGT00940000155208"/>
<dbReference type="HOGENOM" id="CLU_017565_0_0_1"/>
<dbReference type="InParanoid" id="P00747"/>
<dbReference type="OMA" id="TKNGVAC"/>
<dbReference type="OrthoDB" id="41905at2759"/>
<dbReference type="PAN-GO" id="P00747">
    <property type="GO annotations" value="5 GO annotations based on evolutionary models"/>
</dbReference>
<dbReference type="PhylomeDB" id="P00747"/>
<dbReference type="TreeFam" id="TF329901"/>
<dbReference type="BioCyc" id="MetaCyc:HS04553-MONOMER"/>
<dbReference type="BRENDA" id="3.4.21.7">
    <property type="organism ID" value="2681"/>
</dbReference>
<dbReference type="PathwayCommons" id="P00747"/>
<dbReference type="Reactome" id="R-HSA-114608">
    <property type="pathway name" value="Platelet degranulation"/>
</dbReference>
<dbReference type="Reactome" id="R-HSA-1474228">
    <property type="pathway name" value="Degradation of the extracellular matrix"/>
</dbReference>
<dbReference type="Reactome" id="R-HSA-1592389">
    <property type="pathway name" value="Activation of Matrix Metalloproteinases"/>
</dbReference>
<dbReference type="Reactome" id="R-HSA-186797">
    <property type="pathway name" value="Signaling by PDGF"/>
</dbReference>
<dbReference type="Reactome" id="R-HSA-381426">
    <property type="pathway name" value="Regulation of Insulin-like Growth Factor (IGF) transport and uptake by Insulin-like Growth Factor Binding Proteins (IGFBPs)"/>
</dbReference>
<dbReference type="Reactome" id="R-HSA-75205">
    <property type="pathway name" value="Dissolution of Fibrin Clot"/>
</dbReference>
<dbReference type="SABIO-RK" id="P00747"/>
<dbReference type="SignaLink" id="P00747"/>
<dbReference type="SIGNOR" id="P00747"/>
<dbReference type="BioGRID-ORCS" id="5340">
    <property type="hits" value="40 hits in 1154 CRISPR screens"/>
</dbReference>
<dbReference type="ChiTaRS" id="PLG">
    <property type="organism name" value="human"/>
</dbReference>
<dbReference type="EvolutionaryTrace" id="P00747"/>
<dbReference type="GeneWiki" id="Plasmin"/>
<dbReference type="GeneWiki" id="Plasminogen_activator"/>
<dbReference type="GenomeRNAi" id="5340"/>
<dbReference type="Pharos" id="P00747">
    <property type="development level" value="Tclin"/>
</dbReference>
<dbReference type="PRO" id="PR:P00747"/>
<dbReference type="Proteomes" id="UP000005640">
    <property type="component" value="Chromosome 6"/>
</dbReference>
<dbReference type="RNAct" id="P00747">
    <property type="molecule type" value="protein"/>
</dbReference>
<dbReference type="Bgee" id="ENSG00000122194">
    <property type="expression patterns" value="Expressed in right lobe of liver and 103 other cell types or tissues"/>
</dbReference>
<dbReference type="ExpressionAtlas" id="P00747">
    <property type="expression patterns" value="baseline and differential"/>
</dbReference>
<dbReference type="GO" id="GO:0072562">
    <property type="term" value="C:blood microparticle"/>
    <property type="evidence" value="ECO:0007005"/>
    <property type="project" value="UniProtKB"/>
</dbReference>
<dbReference type="GO" id="GO:0009986">
    <property type="term" value="C:cell surface"/>
    <property type="evidence" value="ECO:0000314"/>
    <property type="project" value="BHF-UCL"/>
</dbReference>
<dbReference type="GO" id="GO:0062023">
    <property type="term" value="C:collagen-containing extracellular matrix"/>
    <property type="evidence" value="ECO:0007005"/>
    <property type="project" value="BHF-UCL"/>
</dbReference>
<dbReference type="GO" id="GO:0009897">
    <property type="term" value="C:external side of plasma membrane"/>
    <property type="evidence" value="ECO:0000314"/>
    <property type="project" value="BHF-UCL"/>
</dbReference>
<dbReference type="GO" id="GO:0070062">
    <property type="term" value="C:extracellular exosome"/>
    <property type="evidence" value="ECO:0007005"/>
    <property type="project" value="UniProtKB"/>
</dbReference>
<dbReference type="GO" id="GO:0005576">
    <property type="term" value="C:extracellular region"/>
    <property type="evidence" value="ECO:0000304"/>
    <property type="project" value="Reactome"/>
</dbReference>
<dbReference type="GO" id="GO:0005615">
    <property type="term" value="C:extracellular space"/>
    <property type="evidence" value="ECO:0000314"/>
    <property type="project" value="CAFA"/>
</dbReference>
<dbReference type="GO" id="GO:0098978">
    <property type="term" value="C:glutamatergic synapse"/>
    <property type="evidence" value="ECO:0007669"/>
    <property type="project" value="Ensembl"/>
</dbReference>
<dbReference type="GO" id="GO:0005886">
    <property type="term" value="C:plasma membrane"/>
    <property type="evidence" value="ECO:0000304"/>
    <property type="project" value="Reactome"/>
</dbReference>
<dbReference type="GO" id="GO:0031093">
    <property type="term" value="C:platelet alpha granule lumen"/>
    <property type="evidence" value="ECO:0000304"/>
    <property type="project" value="Reactome"/>
</dbReference>
<dbReference type="GO" id="GO:0098685">
    <property type="term" value="C:Schaffer collateral - CA1 synapse"/>
    <property type="evidence" value="ECO:0007669"/>
    <property type="project" value="Ensembl"/>
</dbReference>
<dbReference type="GO" id="GO:0034185">
    <property type="term" value="F:apolipoprotein binding"/>
    <property type="evidence" value="ECO:0000353"/>
    <property type="project" value="BHF-UCL"/>
</dbReference>
<dbReference type="GO" id="GO:0004175">
    <property type="term" value="F:endopeptidase activity"/>
    <property type="evidence" value="ECO:0000314"/>
    <property type="project" value="BHF-UCL"/>
</dbReference>
<dbReference type="GO" id="GO:0019899">
    <property type="term" value="F:enzyme binding"/>
    <property type="evidence" value="ECO:0000353"/>
    <property type="project" value="CAFA"/>
</dbReference>
<dbReference type="GO" id="GO:0019900">
    <property type="term" value="F:kinase binding"/>
    <property type="evidence" value="ECO:0000353"/>
    <property type="project" value="CAFA"/>
</dbReference>
<dbReference type="GO" id="GO:0002020">
    <property type="term" value="F:protease binding"/>
    <property type="evidence" value="ECO:0000353"/>
    <property type="project" value="BHF-UCL"/>
</dbReference>
<dbReference type="GO" id="GO:1990405">
    <property type="term" value="F:protein antigen binding"/>
    <property type="evidence" value="ECO:0000353"/>
    <property type="project" value="CAFA"/>
</dbReference>
<dbReference type="GO" id="GO:0019904">
    <property type="term" value="F:protein domain specific binding"/>
    <property type="evidence" value="ECO:0000353"/>
    <property type="project" value="UniProtKB"/>
</dbReference>
<dbReference type="GO" id="GO:0051087">
    <property type="term" value="F:protein-folding chaperone binding"/>
    <property type="evidence" value="ECO:0000353"/>
    <property type="project" value="CAFA"/>
</dbReference>
<dbReference type="GO" id="GO:0004252">
    <property type="term" value="F:serine-type endopeptidase activity"/>
    <property type="evidence" value="ECO:0000314"/>
    <property type="project" value="CAFA"/>
</dbReference>
<dbReference type="GO" id="GO:0008236">
    <property type="term" value="F:serine-type peptidase activity"/>
    <property type="evidence" value="ECO:0000304"/>
    <property type="project" value="AgBase"/>
</dbReference>
<dbReference type="GO" id="GO:0005102">
    <property type="term" value="F:signaling receptor binding"/>
    <property type="evidence" value="ECO:0000353"/>
    <property type="project" value="AgBase"/>
</dbReference>
<dbReference type="GO" id="GO:0051702">
    <property type="term" value="P:biological process involved in interaction with symbiont"/>
    <property type="evidence" value="ECO:0000314"/>
    <property type="project" value="CAFA"/>
</dbReference>
<dbReference type="GO" id="GO:0007596">
    <property type="term" value="P:blood coagulation"/>
    <property type="evidence" value="ECO:0000315"/>
    <property type="project" value="HGNC-UCL"/>
</dbReference>
<dbReference type="GO" id="GO:0022617">
    <property type="term" value="P:extracellular matrix disassembly"/>
    <property type="evidence" value="ECO:0000314"/>
    <property type="project" value="BHF-UCL"/>
</dbReference>
<dbReference type="GO" id="GO:0042730">
    <property type="term" value="P:fibrinolysis"/>
    <property type="evidence" value="ECO:0000314"/>
    <property type="project" value="CAFA"/>
</dbReference>
<dbReference type="GO" id="GO:0060716">
    <property type="term" value="P:labyrinthine layer blood vessel development"/>
    <property type="evidence" value="ECO:0007669"/>
    <property type="project" value="Ensembl"/>
</dbReference>
<dbReference type="GO" id="GO:0071674">
    <property type="term" value="P:mononuclear cell migration"/>
    <property type="evidence" value="ECO:0007669"/>
    <property type="project" value="Ensembl"/>
</dbReference>
<dbReference type="GO" id="GO:0046716">
    <property type="term" value="P:muscle cell cellular homeostasis"/>
    <property type="evidence" value="ECO:0007669"/>
    <property type="project" value="Ensembl"/>
</dbReference>
<dbReference type="GO" id="GO:0045445">
    <property type="term" value="P:myoblast differentiation"/>
    <property type="evidence" value="ECO:0007669"/>
    <property type="project" value="Ensembl"/>
</dbReference>
<dbReference type="GO" id="GO:0008285">
    <property type="term" value="P:negative regulation of cell population proliferation"/>
    <property type="evidence" value="ECO:0000304"/>
    <property type="project" value="ProtInc"/>
</dbReference>
<dbReference type="GO" id="GO:2000048">
    <property type="term" value="P:negative regulation of cell-cell adhesion mediated by cadherin"/>
    <property type="evidence" value="ECO:0000304"/>
    <property type="project" value="BHF-UCL"/>
</dbReference>
<dbReference type="GO" id="GO:0010812">
    <property type="term" value="P:negative regulation of cell-substrate adhesion"/>
    <property type="evidence" value="ECO:0000314"/>
    <property type="project" value="BHF-UCL"/>
</dbReference>
<dbReference type="GO" id="GO:0051918">
    <property type="term" value="P:negative regulation of fibrinolysis"/>
    <property type="evidence" value="ECO:0000314"/>
    <property type="project" value="BHF-UCL"/>
</dbReference>
<dbReference type="GO" id="GO:0043536">
    <property type="term" value="P:positive regulation of blood vessel endothelial cell migration"/>
    <property type="evidence" value="ECO:0000316"/>
    <property type="project" value="CAFA"/>
</dbReference>
<dbReference type="GO" id="GO:0051919">
    <property type="term" value="P:positive regulation of fibrinolysis"/>
    <property type="evidence" value="ECO:0000314"/>
    <property type="project" value="AgBase"/>
</dbReference>
<dbReference type="GO" id="GO:0016485">
    <property type="term" value="P:protein processing"/>
    <property type="evidence" value="ECO:0007669"/>
    <property type="project" value="Ensembl"/>
</dbReference>
<dbReference type="GO" id="GO:0006508">
    <property type="term" value="P:proteolysis"/>
    <property type="evidence" value="ECO:0000314"/>
    <property type="project" value="CAFA"/>
</dbReference>
<dbReference type="GO" id="GO:0042246">
    <property type="term" value="P:tissue regeneration"/>
    <property type="evidence" value="ECO:0007669"/>
    <property type="project" value="Ensembl"/>
</dbReference>
<dbReference type="GO" id="GO:0048771">
    <property type="term" value="P:tissue remodeling"/>
    <property type="evidence" value="ECO:0007669"/>
    <property type="project" value="UniProtKB-KW"/>
</dbReference>
<dbReference type="GO" id="GO:0099183">
    <property type="term" value="P:trans-synaptic signaling by BDNF, modulating synaptic transmission"/>
    <property type="evidence" value="ECO:0007669"/>
    <property type="project" value="Ensembl"/>
</dbReference>
<dbReference type="GO" id="GO:0060707">
    <property type="term" value="P:trophoblast giant cell differentiation"/>
    <property type="evidence" value="ECO:0007669"/>
    <property type="project" value="Ensembl"/>
</dbReference>
<dbReference type="CDD" id="cd00108">
    <property type="entry name" value="KR"/>
    <property type="match status" value="5"/>
</dbReference>
<dbReference type="CDD" id="cd01099">
    <property type="entry name" value="PAN_AP_HGF"/>
    <property type="match status" value="1"/>
</dbReference>
<dbReference type="CDD" id="cd00190">
    <property type="entry name" value="Tryp_SPc"/>
    <property type="match status" value="1"/>
</dbReference>
<dbReference type="FunFam" id="2.40.20.10:FF:000005">
    <property type="entry name" value="Plasminogen"/>
    <property type="match status" value="1"/>
</dbReference>
<dbReference type="FunFam" id="2.40.20.10:FF:000011">
    <property type="entry name" value="Plasminogen"/>
    <property type="match status" value="1"/>
</dbReference>
<dbReference type="FunFam" id="2.40.20.10:FF:000013">
    <property type="entry name" value="Plasminogen"/>
    <property type="match status" value="1"/>
</dbReference>
<dbReference type="FunFam" id="2.40.20.10:FF:000014">
    <property type="entry name" value="Plasminogen"/>
    <property type="match status" value="1"/>
</dbReference>
<dbReference type="FunFam" id="3.50.4.10:FF:000011">
    <property type="entry name" value="Plasminogen"/>
    <property type="match status" value="1"/>
</dbReference>
<dbReference type="FunFam" id="2.40.10.10:FF:000003">
    <property type="entry name" value="Transmembrane serine protease 3"/>
    <property type="match status" value="1"/>
</dbReference>
<dbReference type="Gene3D" id="3.50.4.10">
    <property type="entry name" value="Hepatocyte Growth Factor"/>
    <property type="match status" value="1"/>
</dbReference>
<dbReference type="Gene3D" id="2.40.20.10">
    <property type="entry name" value="Plasminogen Kringle 4"/>
    <property type="match status" value="4"/>
</dbReference>
<dbReference type="Gene3D" id="2.40.10.10">
    <property type="entry name" value="Trypsin-like serine proteases"/>
    <property type="match status" value="1"/>
</dbReference>
<dbReference type="InterPro" id="IPR000001">
    <property type="entry name" value="Kringle"/>
</dbReference>
<dbReference type="InterPro" id="IPR013806">
    <property type="entry name" value="Kringle-like"/>
</dbReference>
<dbReference type="InterPro" id="IPR018056">
    <property type="entry name" value="Kringle_CS"/>
</dbReference>
<dbReference type="InterPro" id="IPR038178">
    <property type="entry name" value="Kringle_sf"/>
</dbReference>
<dbReference type="InterPro" id="IPR003609">
    <property type="entry name" value="Pan_app"/>
</dbReference>
<dbReference type="InterPro" id="IPR023317">
    <property type="entry name" value="Pept_S1A_plasmin"/>
</dbReference>
<dbReference type="InterPro" id="IPR009003">
    <property type="entry name" value="Peptidase_S1_PA"/>
</dbReference>
<dbReference type="InterPro" id="IPR043504">
    <property type="entry name" value="Peptidase_S1_PA_chymotrypsin"/>
</dbReference>
<dbReference type="InterPro" id="IPR001314">
    <property type="entry name" value="Peptidase_S1A"/>
</dbReference>
<dbReference type="InterPro" id="IPR050759">
    <property type="entry name" value="Serine_protease_kringle"/>
</dbReference>
<dbReference type="InterPro" id="IPR001254">
    <property type="entry name" value="Trypsin_dom"/>
</dbReference>
<dbReference type="InterPro" id="IPR018114">
    <property type="entry name" value="TRYPSIN_HIS"/>
</dbReference>
<dbReference type="InterPro" id="IPR033116">
    <property type="entry name" value="TRYPSIN_SER"/>
</dbReference>
<dbReference type="PANTHER" id="PTHR24261:SF2">
    <property type="entry name" value="LIPOPROTEIN(A)"/>
    <property type="match status" value="1"/>
</dbReference>
<dbReference type="PANTHER" id="PTHR24261">
    <property type="entry name" value="PLASMINOGEN-RELATED"/>
    <property type="match status" value="1"/>
</dbReference>
<dbReference type="Pfam" id="PF00051">
    <property type="entry name" value="Kringle"/>
    <property type="match status" value="5"/>
</dbReference>
<dbReference type="Pfam" id="PF00024">
    <property type="entry name" value="PAN_1"/>
    <property type="match status" value="1"/>
</dbReference>
<dbReference type="Pfam" id="PF00089">
    <property type="entry name" value="Trypsin"/>
    <property type="match status" value="1"/>
</dbReference>
<dbReference type="PIRSF" id="PIRSF001150">
    <property type="entry name" value="Plasmin"/>
    <property type="match status" value="1"/>
</dbReference>
<dbReference type="PRINTS" id="PR00722">
    <property type="entry name" value="CHYMOTRYPSIN"/>
</dbReference>
<dbReference type="PRINTS" id="PR00018">
    <property type="entry name" value="KRINGLE"/>
</dbReference>
<dbReference type="SMART" id="SM00130">
    <property type="entry name" value="KR"/>
    <property type="match status" value="5"/>
</dbReference>
<dbReference type="SMART" id="SM00473">
    <property type="entry name" value="PAN_AP"/>
    <property type="match status" value="1"/>
</dbReference>
<dbReference type="SMART" id="SM00020">
    <property type="entry name" value="Tryp_SPc"/>
    <property type="match status" value="1"/>
</dbReference>
<dbReference type="SUPFAM" id="SSF57414">
    <property type="entry name" value="Hairpin loop containing domain-like"/>
    <property type="match status" value="1"/>
</dbReference>
<dbReference type="SUPFAM" id="SSF57440">
    <property type="entry name" value="Kringle-like"/>
    <property type="match status" value="5"/>
</dbReference>
<dbReference type="SUPFAM" id="SSF50494">
    <property type="entry name" value="Trypsin-like serine proteases"/>
    <property type="match status" value="1"/>
</dbReference>
<dbReference type="PROSITE" id="PS00021">
    <property type="entry name" value="KRINGLE_1"/>
    <property type="match status" value="5"/>
</dbReference>
<dbReference type="PROSITE" id="PS50070">
    <property type="entry name" value="KRINGLE_2"/>
    <property type="match status" value="5"/>
</dbReference>
<dbReference type="PROSITE" id="PS50948">
    <property type="entry name" value="PAN"/>
    <property type="match status" value="1"/>
</dbReference>
<dbReference type="PROSITE" id="PS50240">
    <property type="entry name" value="TRYPSIN_DOM"/>
    <property type="match status" value="1"/>
</dbReference>
<dbReference type="PROSITE" id="PS00134">
    <property type="entry name" value="TRYPSIN_HIS"/>
    <property type="match status" value="1"/>
</dbReference>
<dbReference type="PROSITE" id="PS00135">
    <property type="entry name" value="TRYPSIN_SER"/>
    <property type="match status" value="1"/>
</dbReference>
<evidence type="ECO:0000255" key="1">
    <source>
        <dbReference type="PROSITE-ProRule" id="PRU00121"/>
    </source>
</evidence>
<evidence type="ECO:0000255" key="2">
    <source>
        <dbReference type="PROSITE-ProRule" id="PRU00274"/>
    </source>
</evidence>
<evidence type="ECO:0000255" key="3">
    <source>
        <dbReference type="PROSITE-ProRule" id="PRU00315"/>
    </source>
</evidence>
<evidence type="ECO:0000256" key="4">
    <source>
        <dbReference type="SAM" id="MobiDB-lite"/>
    </source>
</evidence>
<evidence type="ECO:0000269" key="5">
    <source>
    </source>
</evidence>
<evidence type="ECO:0000269" key="6">
    <source>
    </source>
</evidence>
<evidence type="ECO:0000269" key="7">
    <source>
    </source>
</evidence>
<evidence type="ECO:0000269" key="8">
    <source>
    </source>
</evidence>
<evidence type="ECO:0000269" key="9">
    <source>
    </source>
</evidence>
<evidence type="ECO:0000269" key="10">
    <source>
    </source>
</evidence>
<evidence type="ECO:0000269" key="11">
    <source>
    </source>
</evidence>
<evidence type="ECO:0000269" key="12">
    <source>
    </source>
</evidence>
<evidence type="ECO:0000269" key="13">
    <source>
    </source>
</evidence>
<evidence type="ECO:0000269" key="14">
    <source>
    </source>
</evidence>
<evidence type="ECO:0000269" key="15">
    <source>
    </source>
</evidence>
<evidence type="ECO:0000269" key="16">
    <source>
    </source>
</evidence>
<evidence type="ECO:0000269" key="17">
    <source>
    </source>
</evidence>
<evidence type="ECO:0000269" key="18">
    <source>
    </source>
</evidence>
<evidence type="ECO:0000269" key="19">
    <source>
    </source>
</evidence>
<evidence type="ECO:0000269" key="20">
    <source>
    </source>
</evidence>
<evidence type="ECO:0000269" key="21">
    <source>
    </source>
</evidence>
<evidence type="ECO:0000269" key="22">
    <source>
    </source>
</evidence>
<evidence type="ECO:0000269" key="23">
    <source>
    </source>
</evidence>
<evidence type="ECO:0000269" key="24">
    <source>
    </source>
</evidence>
<evidence type="ECO:0000269" key="25">
    <source>
    </source>
</evidence>
<evidence type="ECO:0000269" key="26">
    <source>
    </source>
</evidence>
<evidence type="ECO:0000269" key="27">
    <source>
    </source>
</evidence>
<evidence type="ECO:0000269" key="28">
    <source>
    </source>
</evidence>
<evidence type="ECO:0000269" key="29">
    <source>
    </source>
</evidence>
<evidence type="ECO:0000269" key="30">
    <source>
    </source>
</evidence>
<evidence type="ECO:0000269" key="31">
    <source>
    </source>
</evidence>
<evidence type="ECO:0000269" key="32">
    <source>
    </source>
</evidence>
<evidence type="ECO:0000269" key="33">
    <source>
    </source>
</evidence>
<evidence type="ECO:0000269" key="34">
    <source>
    </source>
</evidence>
<evidence type="ECO:0000269" key="35">
    <source>
    </source>
</evidence>
<evidence type="ECO:0000269" key="36">
    <source>
    </source>
</evidence>
<evidence type="ECO:0000269" key="37">
    <source>
    </source>
</evidence>
<evidence type="ECO:0000269" key="38">
    <source>
    </source>
</evidence>
<evidence type="ECO:0000269" key="39">
    <source>
    </source>
</evidence>
<evidence type="ECO:0000269" key="40">
    <source>
    </source>
</evidence>
<evidence type="ECO:0000269" key="41">
    <source>
    </source>
</evidence>
<evidence type="ECO:0000269" key="42">
    <source>
    </source>
</evidence>
<evidence type="ECO:0000269" key="43">
    <source>
    </source>
</evidence>
<evidence type="ECO:0000269" key="44">
    <source>
    </source>
</evidence>
<evidence type="ECO:0000269" key="45">
    <source ref="4"/>
</evidence>
<evidence type="ECO:0000269" key="46">
    <source ref="7"/>
</evidence>
<evidence type="ECO:0000269" key="47">
    <source ref="9"/>
</evidence>
<evidence type="ECO:0000303" key="48">
    <source>
    </source>
</evidence>
<evidence type="ECO:0000303" key="49">
    <source>
    </source>
</evidence>
<evidence type="ECO:0000305" key="50"/>
<evidence type="ECO:0007744" key="51">
    <source>
        <dbReference type="PDB" id="4DCB"/>
    </source>
</evidence>
<evidence type="ECO:0007744" key="52">
    <source>
        <dbReference type="PDB" id="7E50"/>
    </source>
</evidence>
<evidence type="ECO:0007744" key="53">
    <source>
    </source>
</evidence>
<evidence type="ECO:0007829" key="54">
    <source>
        <dbReference type="PDB" id="1B2I"/>
    </source>
</evidence>
<evidence type="ECO:0007829" key="55">
    <source>
        <dbReference type="PDB" id="1BML"/>
    </source>
</evidence>
<evidence type="ECO:0007829" key="56">
    <source>
        <dbReference type="PDB" id="1DDJ"/>
    </source>
</evidence>
<evidence type="ECO:0007829" key="57">
    <source>
        <dbReference type="PDB" id="1HPJ"/>
    </source>
</evidence>
<evidence type="ECO:0007829" key="58">
    <source>
        <dbReference type="PDB" id="1HPK"/>
    </source>
</evidence>
<evidence type="ECO:0007829" key="59">
    <source>
        <dbReference type="PDB" id="1I5K"/>
    </source>
</evidence>
<evidence type="ECO:0007829" key="60">
    <source>
        <dbReference type="PDB" id="1KI0"/>
    </source>
</evidence>
<evidence type="ECO:0007829" key="61">
    <source>
        <dbReference type="PDB" id="1KRN"/>
    </source>
</evidence>
<evidence type="ECO:0007829" key="62">
    <source>
        <dbReference type="PDB" id="1PK4"/>
    </source>
</evidence>
<evidence type="ECO:0007829" key="63">
    <source>
        <dbReference type="PDB" id="1PMK"/>
    </source>
</evidence>
<evidence type="ECO:0007829" key="64">
    <source>
        <dbReference type="PDB" id="1QRZ"/>
    </source>
</evidence>
<evidence type="ECO:0007829" key="65">
    <source>
        <dbReference type="PDB" id="2DOH"/>
    </source>
</evidence>
<evidence type="ECO:0007829" key="66">
    <source>
        <dbReference type="PDB" id="2KNF"/>
    </source>
</evidence>
<evidence type="ECO:0007829" key="67">
    <source>
        <dbReference type="PDB" id="2L0S"/>
    </source>
</evidence>
<evidence type="ECO:0007829" key="68">
    <source>
        <dbReference type="PDB" id="2PK4"/>
    </source>
</evidence>
<evidence type="ECO:0007829" key="69">
    <source>
        <dbReference type="PDB" id="4CIK"/>
    </source>
</evidence>
<evidence type="ECO:0007829" key="70">
    <source>
        <dbReference type="PDB" id="4DUR"/>
    </source>
</evidence>
<evidence type="ECO:0007829" key="71">
    <source>
        <dbReference type="PDB" id="5HPG"/>
    </source>
</evidence>
<evidence type="ECO:0007829" key="72">
    <source>
        <dbReference type="PDB" id="5UGG"/>
    </source>
</evidence>
<evidence type="ECO:0007829" key="73">
    <source>
        <dbReference type="PDB" id="6OG4"/>
    </source>
</evidence>
<evidence type="ECO:0007829" key="74">
    <source>
        <dbReference type="PDB" id="7UAH"/>
    </source>
</evidence>
<evidence type="ECO:0007829" key="75">
    <source>
        <dbReference type="PDB" id="8F7U"/>
    </source>
</evidence>
<sequence length="810" mass="90569">MEHKEVVLLLLLFLKSGQGEPLDDYVNTQGASLFSVTKKQLGAGSIEECAAKCEEDEEFTCRAFQYHSKEQQCVIMAENRKSSIIIRMRDVVLFEKKVYLSECKTGNGKNYRGTMSKTKNGITCQKWSSTSPHRPRFSPATHPSEGLEENYCRNPDNDPQGPWCYTTDPEKRYDYCDILECEEECMHCSGENYDGKISKTMSGLECQAWDSQSPHAHGYIPSKFPNKNLKKNYCRNPDRELRPWCFTTDPNKRWELCDIPRCTTPPPSSGPTYQCLKGTGENYRGNVAVTVSGHTCQHWSAQTPHTHNRTPENFPCKNLDENYCRNPDGKRAPWCHTTNSQVRWEYCKIPSCDSSPVSTEQLAPTAPPELTPVVQDCYHGDGQSYRGTSSTTTTGKKCQSWSSMTPHRHQKTPENYPNAGLTMNYCRNPDADKGPWCFTTDPSVRWEYCNLKKCSGTEASVVAPPPVVLLPDVETPSEEDCMFGNGKGYRGKRATTVTGTPCQDWAAQEPHRHSIFTPETNPRAGLEKNYCRNPDGDVGGPWCYTTNPRKLYDYCDVPQCAAPSFDCGKPQVEPKKCPGRVVGGCVAHPHSWPWQVSLRTRFGMHFCGGTLISPEWVLTAAHCLEKSPRPSSYKVILGAHQEVNLEPHVQEIEVSRLFLEPTRKDIALLKLSSPAVITDKVIPACLPSPNYVVADRTECFITGWGETQGTFGAGLLKEAQLPVIENKVCNRYEFLNGRVQSTELCAGHLAGGTDSCQGDSGGPLVCFEKDKYILQGVTSWGLGCARPNKPGVYVRVSRFVTWIEGVMRNN</sequence>
<gene>
    <name type="primary">PLG</name>
</gene>
<reference key="1">
    <citation type="journal article" date="1990" name="J. Biol. Chem.">
        <title>Characterization of the gene for human plasminogen, a key proenzyme in the fibrinolytic system.</title>
        <authorList>
            <person name="Petersen T.E."/>
            <person name="Martzen M.R."/>
            <person name="Ichinose A."/>
            <person name="Davie E.W."/>
        </authorList>
    </citation>
    <scope>NUCLEOTIDE SEQUENCE [GENOMIC DNA]</scope>
    <scope>VARIANT ASN-472</scope>
</reference>
<reference key="2">
    <citation type="journal article" date="1987" name="FEBS Lett.">
        <title>Molecular cloning and characterization of a full-length cDNA clone for human plasminogen.</title>
        <authorList>
            <person name="Forsgren M."/>
            <person name="Raden B."/>
            <person name="Israelsson M."/>
            <person name="Larsson K."/>
            <person name="Heden L.-O."/>
        </authorList>
    </citation>
    <scope>NUCLEOTIDE SEQUENCE [MRNA]</scope>
</reference>
<reference key="3">
    <citation type="submission" date="1991-10" db="EMBL/GenBank/DDBJ databases">
        <title>Expression of recombinant human plasminogen and aglycoplasminogen in HeLa cells.</title>
        <authorList>
            <person name="Browne M.J."/>
            <person name="Chapman C.G."/>
            <person name="Dodd I."/>
            <person name="Carey J.E."/>
            <person name="Lawrence G.M.P."/>
            <person name="Mitchell D."/>
            <person name="Robinson J.H."/>
        </authorList>
    </citation>
    <scope>NUCLEOTIDE SEQUENCE [MRNA]</scope>
    <source>
        <tissue>Liver</tissue>
    </source>
</reference>
<reference key="4">
    <citation type="submission" date="2002-12" db="EMBL/GenBank/DDBJ databases">
        <authorList>
            <consortium name="SeattleSNPs variation discovery resource"/>
        </authorList>
    </citation>
    <scope>NUCLEOTIDE SEQUENCE [GENOMIC DNA]</scope>
    <scope>VARIANTS LYS-57; GLN-133; HIS-261; TRP-408; ASN-472; VAL-494 AND TRP-523</scope>
</reference>
<reference key="5">
    <citation type="journal article" date="2003" name="Nature">
        <title>The DNA sequence and analysis of human chromosome 6.</title>
        <authorList>
            <person name="Mungall A.J."/>
            <person name="Palmer S.A."/>
            <person name="Sims S.K."/>
            <person name="Edwards C.A."/>
            <person name="Ashurst J.L."/>
            <person name="Wilming L."/>
            <person name="Jones M.C."/>
            <person name="Horton R."/>
            <person name="Hunt S.E."/>
            <person name="Scott C.E."/>
            <person name="Gilbert J.G.R."/>
            <person name="Clamp M.E."/>
            <person name="Bethel G."/>
            <person name="Milne S."/>
            <person name="Ainscough R."/>
            <person name="Almeida J.P."/>
            <person name="Ambrose K.D."/>
            <person name="Andrews T.D."/>
            <person name="Ashwell R.I.S."/>
            <person name="Babbage A.K."/>
            <person name="Bagguley C.L."/>
            <person name="Bailey J."/>
            <person name="Banerjee R."/>
            <person name="Barker D.J."/>
            <person name="Barlow K.F."/>
            <person name="Bates K."/>
            <person name="Beare D.M."/>
            <person name="Beasley H."/>
            <person name="Beasley O."/>
            <person name="Bird C.P."/>
            <person name="Blakey S.E."/>
            <person name="Bray-Allen S."/>
            <person name="Brook J."/>
            <person name="Brown A.J."/>
            <person name="Brown J.Y."/>
            <person name="Burford D.C."/>
            <person name="Burrill W."/>
            <person name="Burton J."/>
            <person name="Carder C."/>
            <person name="Carter N.P."/>
            <person name="Chapman J.C."/>
            <person name="Clark S.Y."/>
            <person name="Clark G."/>
            <person name="Clee C.M."/>
            <person name="Clegg S."/>
            <person name="Cobley V."/>
            <person name="Collier R.E."/>
            <person name="Collins J.E."/>
            <person name="Colman L.K."/>
            <person name="Corby N.R."/>
            <person name="Coville G.J."/>
            <person name="Culley K.M."/>
            <person name="Dhami P."/>
            <person name="Davies J."/>
            <person name="Dunn M."/>
            <person name="Earthrowl M.E."/>
            <person name="Ellington A.E."/>
            <person name="Evans K.A."/>
            <person name="Faulkner L."/>
            <person name="Francis M.D."/>
            <person name="Frankish A."/>
            <person name="Frankland J."/>
            <person name="French L."/>
            <person name="Garner P."/>
            <person name="Garnett J."/>
            <person name="Ghori M.J."/>
            <person name="Gilby L.M."/>
            <person name="Gillson C.J."/>
            <person name="Glithero R.J."/>
            <person name="Grafham D.V."/>
            <person name="Grant M."/>
            <person name="Gribble S."/>
            <person name="Griffiths C."/>
            <person name="Griffiths M.N.D."/>
            <person name="Hall R."/>
            <person name="Halls K.S."/>
            <person name="Hammond S."/>
            <person name="Harley J.L."/>
            <person name="Hart E.A."/>
            <person name="Heath P.D."/>
            <person name="Heathcott R."/>
            <person name="Holmes S.J."/>
            <person name="Howden P.J."/>
            <person name="Howe K.L."/>
            <person name="Howell G.R."/>
            <person name="Huckle E."/>
            <person name="Humphray S.J."/>
            <person name="Humphries M.D."/>
            <person name="Hunt A.R."/>
            <person name="Johnson C.M."/>
            <person name="Joy A.A."/>
            <person name="Kay M."/>
            <person name="Keenan S.J."/>
            <person name="Kimberley A.M."/>
            <person name="King A."/>
            <person name="Laird G.K."/>
            <person name="Langford C."/>
            <person name="Lawlor S."/>
            <person name="Leongamornlert D.A."/>
            <person name="Leversha M."/>
            <person name="Lloyd C.R."/>
            <person name="Lloyd D.M."/>
            <person name="Loveland J.E."/>
            <person name="Lovell J."/>
            <person name="Martin S."/>
            <person name="Mashreghi-Mohammadi M."/>
            <person name="Maslen G.L."/>
            <person name="Matthews L."/>
            <person name="McCann O.T."/>
            <person name="McLaren S.J."/>
            <person name="McLay K."/>
            <person name="McMurray A."/>
            <person name="Moore M.J.F."/>
            <person name="Mullikin J.C."/>
            <person name="Niblett D."/>
            <person name="Nickerson T."/>
            <person name="Novik K.L."/>
            <person name="Oliver K."/>
            <person name="Overton-Larty E.K."/>
            <person name="Parker A."/>
            <person name="Patel R."/>
            <person name="Pearce A.V."/>
            <person name="Peck A.I."/>
            <person name="Phillimore B.J.C.T."/>
            <person name="Phillips S."/>
            <person name="Plumb R.W."/>
            <person name="Porter K.M."/>
            <person name="Ramsey Y."/>
            <person name="Ranby S.A."/>
            <person name="Rice C.M."/>
            <person name="Ross M.T."/>
            <person name="Searle S.M."/>
            <person name="Sehra H.K."/>
            <person name="Sheridan E."/>
            <person name="Skuce C.D."/>
            <person name="Smith S."/>
            <person name="Smith M."/>
            <person name="Spraggon L."/>
            <person name="Squares S.L."/>
            <person name="Steward C.A."/>
            <person name="Sycamore N."/>
            <person name="Tamlyn-Hall G."/>
            <person name="Tester J."/>
            <person name="Theaker A.J."/>
            <person name="Thomas D.W."/>
            <person name="Thorpe A."/>
            <person name="Tracey A."/>
            <person name="Tromans A."/>
            <person name="Tubby B."/>
            <person name="Wall M."/>
            <person name="Wallis J.M."/>
            <person name="West A.P."/>
            <person name="White S.S."/>
            <person name="Whitehead S.L."/>
            <person name="Whittaker H."/>
            <person name="Wild A."/>
            <person name="Willey D.J."/>
            <person name="Wilmer T.E."/>
            <person name="Wood J.M."/>
            <person name="Wray P.W."/>
            <person name="Wyatt J.C."/>
            <person name="Young L."/>
            <person name="Younger R.M."/>
            <person name="Bentley D.R."/>
            <person name="Coulson A."/>
            <person name="Durbin R.M."/>
            <person name="Hubbard T."/>
            <person name="Sulston J.E."/>
            <person name="Dunham I."/>
            <person name="Rogers J."/>
            <person name="Beck S."/>
        </authorList>
    </citation>
    <scope>NUCLEOTIDE SEQUENCE [LARGE SCALE GENOMIC DNA]</scope>
</reference>
<reference key="6">
    <citation type="journal article" date="2004" name="Genome Res.">
        <title>The status, quality, and expansion of the NIH full-length cDNA project: the Mammalian Gene Collection (MGC).</title>
        <authorList>
            <consortium name="The MGC Project Team"/>
        </authorList>
    </citation>
    <scope>NUCLEOTIDE SEQUENCE [LARGE SCALE MRNA]</scope>
    <scope>VARIANT ASP-676</scope>
    <source>
        <tissue>Kidney</tissue>
    </source>
</reference>
<reference key="7">
    <citation type="submission" date="1977-07" db="PIR data bank">
        <authorList>
            <person name="Sottrup-Jensen L."/>
            <person name="Petersen T.E."/>
            <person name="Magnusson S."/>
        </authorList>
    </citation>
    <scope>PROTEIN SEQUENCE OF 20-810</scope>
    <scope>VARIANT ASN-472</scope>
</reference>
<reference key="8">
    <citation type="journal article" date="1975" name="Eur. J. Biochem.">
        <title>Structural relationship between 'glutamic acid' and 'lysine' forms of human plasminogen and their interaction with the NH2-terminal activation peptide as studied by affinity chromatography.</title>
        <authorList>
            <person name="Wiman B."/>
            <person name="Wallen P."/>
        </authorList>
    </citation>
    <scope>PROTEIN SEQUENCE OF 20-100</scope>
</reference>
<reference key="9">
    <citation type="book" date="1978" name="Progress in chemical fibrinolysis and thrombolysis">
        <title>The primary structure of human plasminogen.</title>
        <editorList>
            <person name="Davidson J.F."/>
            <person name="Rowan R.M."/>
            <person name="Samama M.M."/>
            <person name="Desnoyers P.C."/>
        </editorList>
        <authorList>
            <person name="Sottrup-Jensen L."/>
            <person name="Claeys H."/>
            <person name="Zajdel M."/>
            <person name="Petersen T.E."/>
            <person name="Magnusson S."/>
        </authorList>
    </citation>
    <scope>PROTEIN SEQUENCE OF 95-580; 581-626; 657-700 AND 732-810</scope>
    <scope>VARIANT ASN-472</scope>
</reference>
<reference key="10">
    <citation type="journal article" date="1984" name="Biochemistry">
        <title>Characterization of a complementary deoxyribonucleic acid coding for human and bovine plasminogen.</title>
        <authorList>
            <person name="Malinowski D.P."/>
            <person name="Sadler J.E."/>
            <person name="Davie E.W."/>
        </authorList>
    </citation>
    <scope>NUCLEOTIDE SEQUENCE [MRNA] OF 292-810</scope>
</reference>
<reference key="11">
    <citation type="journal article" date="1975" name="Eur. J. Biochem.">
        <title>Amino-acid sequence of the cyanogen-bromide fragment from human plasminogen that forms the linkage between the plasmin chains.</title>
        <authorList>
            <person name="Wiman B."/>
            <person name="Wallen P."/>
        </authorList>
    </citation>
    <scope>PROTEIN SEQUENCE OF 483-604</scope>
</reference>
<reference key="12">
    <citation type="journal article" date="1977" name="Eur. J. Biochem.">
        <title>Primary structure of the B-chain of human plasmin.</title>
        <authorList>
            <person name="Wiman B."/>
        </authorList>
    </citation>
    <scope>PROTEIN SEQUENCE OF 581-810</scope>
</reference>
<reference key="13">
    <citation type="journal article" date="1980" name="Nature">
        <title>Precursor complement protein (pro-C4) is converted in vitro to native C4 by plasmin.</title>
        <authorList>
            <person name="Goldberger G."/>
            <person name="Colten H.R."/>
        </authorList>
    </citation>
    <scope>FUNCTION</scope>
    <scope>CATALYTIC ACTIVITY</scope>
</reference>
<reference key="14">
    <citation type="journal article" date="1973" name="J. Biol. Chem.">
        <title>The primary structure of human plasminogen. II. The histidine loop of human plasmin: light (B) chain active center histidine sequence.</title>
        <authorList>
            <person name="Robbins K.C."/>
            <person name="Bernabe P."/>
            <person name="Arzadon L."/>
            <person name="Summaria L."/>
        </authorList>
    </citation>
    <scope>ACTIVE SITE</scope>
</reference>
<reference key="15">
    <citation type="journal article" date="1969" name="J. Biol. Chem.">
        <title>Studies on the active center of human plasmin. Partial amino acid sequence of a peptide containing the active center serine residue.</title>
        <authorList>
            <person name="Groskopf W.R."/>
            <person name="Summaria L."/>
            <person name="Robbins K.C."/>
        </authorList>
    </citation>
    <scope>ACTIVE SITE</scope>
</reference>
<reference key="16">
    <citation type="journal article" date="1982" name="J. Biol. Chem.">
        <title>Structure of the omega-aminocarboxylic acid-binding sites of human plasminogen. Arginine 70 and aspartic acid 56 are essential for binding of ligand by kringle 4.</title>
        <authorList>
            <person name="Trexler M."/>
            <person name="Vali Z."/>
            <person name="Patthy L."/>
        </authorList>
    </citation>
    <scope>OMEGA-AMINOCARBOXYLIC ACID-BINDING SITES</scope>
</reference>
<reference key="17">
    <citation type="journal article" date="1984" name="J. Biol. Chem.">
        <title>The fibrin-binding site of human plasminogen. Arginines 32 and 34 are essential for fibrin affinity of the kringle 1 domain.</title>
        <authorList>
            <person name="Vali Z."/>
            <person name="Patthy L."/>
        </authorList>
    </citation>
    <scope>FIBRIN AND OMEGA-AMINOCARBOXYLIC ACID BINDING SITES</scope>
</reference>
<reference key="18">
    <citation type="journal article" date="1997" name="Biochemistry">
        <title>Serine-578 is a major phosphorylation locus in human plasma plasminogen.</title>
        <authorList>
            <person name="Wang H."/>
            <person name="Prorok M."/>
            <person name="Bretthauer R.K."/>
            <person name="Castellino F.J."/>
        </authorList>
    </citation>
    <scope>PHOSPHORYLATION AT SER-597</scope>
</reference>
<reference key="19">
    <citation type="journal article" date="1988" name="Eur. J. Biochem.">
        <title>The N- and O-linked carbohydrate chains of human, bovine and porcine plasminogen. Species specificity in relation to sialylation and fucosylation patterns.</title>
        <authorList>
            <person name="Marti T."/>
            <person name="Schaller J."/>
            <person name="Rickli E.E."/>
            <person name="Schmid K."/>
            <person name="Kamerling J.P."/>
            <person name="Gerwig G.J."/>
            <person name="van Halbeek H."/>
            <person name="Vliegenthart J.F.G."/>
        </authorList>
    </citation>
    <scope>GLYCOSYLATION AT SER-268; ASN-308 AND THR-365</scope>
    <scope>STRUCTURE OF CARBOHYDRATES</scope>
</reference>
<reference key="20">
    <citation type="journal article" date="1997" name="J. Biol. Chem.">
        <title>Acceleration of plasminogen activation by tissue plasminogen activator on surface-bound histidine-proline-rich glycoprotein.</title>
        <authorList>
            <person name="Borza D.B."/>
            <person name="Morgan W.T."/>
        </authorList>
    </citation>
    <scope>INTERACTION WITH HRG</scope>
</reference>
<reference key="21">
    <citation type="journal article" date="1997" name="J. Biol. Chem.">
        <title>Evidence for a novel O-linked sialylated trisaccharide on Ser-248 of human plasminogen 2.</title>
        <authorList>
            <person name="Pirie-Shepherd S.R."/>
            <person name="Stevens R.D."/>
            <person name="Andon N.L."/>
            <person name="Enghild J.J."/>
            <person name="Pizzo S.V."/>
        </authorList>
    </citation>
    <scope>GLYCOSYLATION AT SER-268</scope>
</reference>
<reference key="22">
    <citation type="journal article" date="1994" name="Cell">
        <title>Angiostatin: a novel angiogenesis inhibitor that mediates the suppression of metastases by a Lewis lung carcinoma.</title>
        <authorList>
            <person name="O'Reilly M.S."/>
            <person name="Holmgren L."/>
            <person name="Shing Y."/>
            <person name="Chen C."/>
            <person name="Rosenthal R.A."/>
            <person name="Moses M."/>
            <person name="Lane W.S."/>
            <person name="Cao Y."/>
            <person name="Sage E.H."/>
            <person name="Folkman J."/>
        </authorList>
    </citation>
    <scope>CHARACTERIZATION OF ANGIOSTATIN</scope>
    <scope>PARTIAL PROTEIN SEQUENCE</scope>
</reference>
<reference key="23">
    <citation type="journal article" date="1997" name="Cancer Res.">
        <title>A recombinant human angiostatin protein inhibits experimental primary and metastatic cancer.</title>
        <authorList>
            <person name="Sim B.K."/>
            <person name="O'Reilly M.S."/>
            <person name="Liang H."/>
            <person name="Fortier A.H."/>
            <person name="He W."/>
            <person name="Madsen J.W."/>
            <person name="Lapcevich R."/>
            <person name="Nacy C.A."/>
        </authorList>
    </citation>
    <scope>CHARACTERIZATION OF ANGIOSTATIN</scope>
</reference>
<reference key="24">
    <citation type="journal article" date="1998" name="Biochemistry">
        <title>Generation of an angiostatin-like fragment from plasminogen by stromelysin-1 (MMP-3).</title>
        <authorList>
            <person name="Lijnen H.R."/>
            <person name="Ugwu F."/>
            <person name="Bini A."/>
            <person name="Collen D."/>
        </authorList>
    </citation>
    <scope>PROTEOLYTIC CLEAVAGE</scope>
</reference>
<reference key="25">
    <citation type="journal article" date="1999" name="Proc. Natl. Acad. Sci. U.S.A.">
        <title>Angiostatin binds ATP synthase on the surface of human endothelial cells.</title>
        <authorList>
            <person name="Moser T.L."/>
            <person name="Stack M.S."/>
            <person name="Asplin I."/>
            <person name="Enghild J.J."/>
            <person name="Hojrup P."/>
            <person name="Everitt L."/>
            <person name="Hubchak S."/>
            <person name="Schnaper H.W."/>
            <person name="Pizzo S.V."/>
        </authorList>
    </citation>
    <scope>INTERACTION WITH ATP5F1A</scope>
    <scope>SUBCELLULAR LOCATION</scope>
</reference>
<reference key="26">
    <citation type="journal article" date="2000" name="J. Biol. Chem.">
        <title>Binding of the NG2 proteoglycan to kringle domains modulates the functional properties of angiostatin and plasmin(ogen).</title>
        <authorList>
            <person name="Goretzki L."/>
            <person name="Lombardo C.R."/>
            <person name="Stallcup W.B."/>
        </authorList>
    </citation>
    <scope>INTERACTION WITH CSPG4</scope>
    <scope>DOMAIN</scope>
</reference>
<reference key="27">
    <citation type="journal article" date="2004" name="J. Biol. Chem.">
        <title>Protease nexin-1 inhibits plasminogen activation-induced apoptosis of adherent cells.</title>
        <authorList>
            <person name="Rossignol P."/>
            <person name="Ho-Tin-Noe B."/>
            <person name="Vranckx R."/>
            <person name="Bouton M.C."/>
            <person name="Meilhac O."/>
            <person name="Lijnen H.R."/>
            <person name="Guillin M.C."/>
            <person name="Michel J.B."/>
            <person name="Angles-Cano E."/>
        </authorList>
    </citation>
    <scope>PROTEOLYTIC PROCESSING</scope>
    <scope>ACTIVITY REGULATION</scope>
    <scope>SUBCELLULAR LOCATION</scope>
    <scope>FUNCTION OF PLASMIN</scope>
    <scope>MUTAGENESIS OF SER-741</scope>
</reference>
<reference key="28">
    <citation type="journal article" date="2004" name="J. Biol. Chem.">
        <title>Cell surface adenosine deaminase binds and stimulates plasminogen activation on 1-LN human prostate cancer cells.</title>
        <authorList>
            <person name="Gonzalez-Gronow M."/>
            <person name="Hershfield M.S."/>
            <person name="Arredondo-Vega F.X."/>
            <person name="Pizzo S.V."/>
        </authorList>
    </citation>
    <scope>INTERACTION WITH ADA</scope>
</reference>
<reference key="29">
    <citation type="journal article" date="2005" name="J. Biol. Chem.">
        <title>Angiomotin regulates endothelial cell-cell junctions and cell motility.</title>
        <authorList>
            <person name="Bratt A."/>
            <person name="Birot O."/>
            <person name="Sinha I."/>
            <person name="Veitonmaeki N."/>
            <person name="Aase K."/>
            <person name="Ernkvist M."/>
            <person name="Holmgren L."/>
        </authorList>
    </citation>
    <scope>INTERACTION WITH AMOT</scope>
</reference>
<reference key="30">
    <citation type="journal article" date="2008" name="Proteomics">
        <title>Identification of N-linked glycoproteins in human milk by hydrophilic interaction liquid chromatography and mass spectrometry.</title>
        <authorList>
            <person name="Picariello G."/>
            <person name="Ferranti P."/>
            <person name="Mamone G."/>
            <person name="Roepstorff P."/>
            <person name="Addeo F."/>
        </authorList>
    </citation>
    <scope>GLYCOSYLATION [LARGE SCALE ANALYSIS] AT ASN-308</scope>
    <source>
        <tissue>Milk</tissue>
    </source>
</reference>
<reference key="31">
    <citation type="journal article" date="1990" name="J. Biol. Chem.">
        <title>A unique proteolytic fragment of human fibrinogen containing the A alpha COOH-terminal domain of the native molecule.</title>
        <authorList>
            <person name="Kirschbaum N.E."/>
            <person name="Budzynski A.Z."/>
        </authorList>
    </citation>
    <scope>CATALYTIC ACTIVITY</scope>
</reference>
<reference key="32">
    <citation type="journal article" date="2009" name="Biochem. J.">
        <title>Regulation of histidine-rich glycoprotein (HRG) function via plasmin-mediated proteolytic cleavage.</title>
        <authorList>
            <person name="Poon I.K."/>
            <person name="Olsson A.K."/>
            <person name="Hulett M.D."/>
            <person name="Parish C.R."/>
        </authorList>
    </citation>
    <scope>INTERACTION WITH HRG</scope>
</reference>
<reference key="33">
    <citation type="journal article" date="2011" name="Proc. Natl. Acad. Sci. U.S.A.">
        <title>Plasmodium ookinetes coopt mammalian plasminogen to invade the mosquito midgut.</title>
        <authorList>
            <person name="Ghosh A.K."/>
            <person name="Coppens I."/>
            <person name="Gaardsvoll H."/>
            <person name="Ploug M."/>
            <person name="Jacobs-Lorena M."/>
        </authorList>
    </citation>
    <scope>FUNCTION (MICROBIAL INFECTION)</scope>
    <scope>INTERACTION WITH P.FALCIPARUM ENO (MICROBIAL INFECTION)</scope>
    <scope>MUTAGENESIS OF SER-741</scope>
</reference>
<reference key="34">
    <citation type="journal article" date="2012" name="J. Biol. Chem.">
        <title>OspC is potent plasminogen receptor on surface of Borrelia burgdorferi.</title>
        <authorList>
            <person name="Oender O."/>
            <person name="Humphrey P.T."/>
            <person name="McOmber B."/>
            <person name="Korobova F."/>
            <person name="Francella N."/>
            <person name="Greenbaum D.C."/>
            <person name="Brisson D."/>
        </authorList>
    </citation>
    <scope>POSSIBLE FUNCTION (MICROBIAL INFECTION)</scope>
    <scope>INTERACTION WITH B.BURGDORFERI OSPC (MICROBIAL INFECTION)</scope>
</reference>
<reference key="35">
    <citation type="journal article" date="2014" name="J. Proteomics">
        <title>An enzyme assisted RP-RPLC approach for in-depth analysis of human liver phosphoproteome.</title>
        <authorList>
            <person name="Bian Y."/>
            <person name="Song C."/>
            <person name="Cheng K."/>
            <person name="Dong M."/>
            <person name="Wang F."/>
            <person name="Huang J."/>
            <person name="Sun D."/>
            <person name="Wang L."/>
            <person name="Ye M."/>
            <person name="Zou H."/>
        </authorList>
    </citation>
    <scope>PHOSPHORYLATION [LARGE SCALE ANALYSIS] AT SER-688</scope>
    <scope>IDENTIFICATION BY MASS SPECTROMETRY [LARGE SCALE ANALYSIS]</scope>
    <source>
        <tissue>Liver</tissue>
    </source>
</reference>
<reference key="36">
    <citation type="journal article" date="2016" name="J. Biol. Chem.">
        <title>Molecular Interactions of human plasminogen with fibronectin-binding Protein B (FnBPB), a fibrinogen/fibronectin-binding protein from Staphylococcus aureus.</title>
        <authorList>
            <person name="Pietrocola G."/>
            <person name="Nobile G."/>
            <person name="Gianotti V."/>
            <person name="Zapotoczna M."/>
            <person name="Foster T.J."/>
            <person name="Geoghegan J.A."/>
            <person name="Speziale P."/>
        </authorList>
    </citation>
    <scope>INTERACTION WITH STAPHYLOCOCCUS AUREUS PROTEIN FNBB (MICROBIAL INFECTION)</scope>
</reference>
<reference key="37">
    <citation type="journal article" date="2019" name="IScience">
        <title>Increased Mosquito Midgut Infection by Dengue Virus Recruitment of Plasmin Is Blocked by an Endogenous Kazal-type Inhibitor.</title>
        <authorList>
            <person name="Ramesh K."/>
            <person name="Walvekar V.A."/>
            <person name="Wong B."/>
            <person name="Sayed A.M.M."/>
            <person name="Misse D."/>
            <person name="Kini R.M."/>
            <person name="Mok Y.K."/>
            <person name="Pompon J."/>
        </authorList>
    </citation>
    <scope>FUNCTION (MICROBIAL INFECTION)</scope>
    <scope>INTERACTION WITH MOSQUITO KAZAL-TYPE TRYPSIN INHIBITOR</scope>
</reference>
<reference key="38">
    <citation type="journal article" date="2021" name="Int. J. Mol. Sci.">
        <title>Ixodes ricinus Salivary Serpin Iripin-8 Inhibits the Intrinsic Pathway of Coagulation and Complement.</title>
        <authorList>
            <person name="Kotal J."/>
            <person name="Polderdijk S.G.I."/>
            <person name="Langhansova H."/>
            <person name="Ederova M."/>
            <person name="Martins L.A."/>
            <person name="Berankova Z."/>
            <person name="Chlastakova A."/>
            <person name="Hajdusek O."/>
            <person name="Kotsyfakis M."/>
            <person name="Huntington J.A."/>
            <person name="Chmelar J."/>
        </authorList>
    </citation>
    <scope>INTERACTION WITH TICK IRIPIN-8</scope>
</reference>
<reference key="39">
    <citation type="journal article" date="2023" name="Front. Immunol.">
        <title>Iripin-1, a new anti-inflammatory tick serpin, inhibits leukocyte recruitment &lt;i&gt;in vivo&lt;/i&gt; while altering the levels of chemokines and adhesion molecules.</title>
        <authorList>
            <person name="Chlastakova A."/>
            <person name="Kascakova B."/>
            <person name="Kotal J."/>
            <person name="Langhansova H."/>
            <person name="Kotsyfakis M."/>
            <person name="Kuta Smatanova I."/>
            <person name="Tirloni L."/>
            <person name="Chmelar J."/>
        </authorList>
    </citation>
    <scope>INTERACTION WITH TICK IRIPIN-1</scope>
</reference>
<reference key="40">
    <citation type="journal article" date="1991" name="Biochemistry">
        <title>Crystal and molecular structure of human plasminogen kringle 4 refined at 1.9-A resolution.</title>
        <authorList>
            <person name="Mulichak A.M."/>
            <person name="Tulinsky A."/>
            <person name="Ravichandran K.G."/>
        </authorList>
    </citation>
    <scope>X-RAY CRYSTALLOGRAPHY (1.9 ANGSTROMS) OF 374-461</scope>
</reference>
<reference key="41">
    <citation type="journal article" date="1991" name="Biochemistry">
        <title>The refined structure of the epsilon-aminocaproic acid complex of human plasminogen kringle 4.</title>
        <authorList>
            <person name="Wu T.-P."/>
            <person name="Padmanabhan K."/>
            <person name="Tulinsky A."/>
            <person name="Mulichak A.M."/>
        </authorList>
    </citation>
    <scope>X-RAY CRYSTALLOGRAPHY (2.25 ANGSTROMS) OF 374-461</scope>
</reference>
<reference key="42">
    <citation type="journal article" date="1994" name="Blood Coagul. Fibrinolysis">
        <title>The structure of recombinant plasminogen kringle 1 and the fibrin binding site.</title>
        <authorList>
            <person name="Wu T.-P."/>
            <person name="Padmanabhan K.P."/>
            <person name="Tulinsky A."/>
        </authorList>
    </citation>
    <scope>X-RAY CRYSTALLOGRAPHY (2.48 ANGSTROMS) OF 101-181</scope>
</reference>
<reference key="43">
    <citation type="journal article" date="1996" name="Biochemistry">
        <title>Crystal structures of the recombinant kringle 1 domain of human plasminogen in complexes with the ligands epsilon-aminocaproic acid and trans-4-(aminomethyl)cyclohexane-1-carboxylic Acid.</title>
        <authorList>
            <person name="Mathews I.I."/>
            <person name="Vanderhoff-Hanaver P."/>
            <person name="Castellino F.J."/>
            <person name="Tulinsky A."/>
        </authorList>
    </citation>
    <scope>X-RAY CRYSTALLOGRAPHY (2.1 ANGSTROMS) OF 102-181</scope>
</reference>
<reference key="44">
    <citation type="journal article" date="1997" name="Acta Crystallogr. D">
        <title>Structure of human plasminogen kringle 4 at 1.68 Angstrom and 277 K. A possible structural role of disordered residues.</title>
        <authorList>
            <person name="Stec B."/>
            <person name="Yamano A."/>
            <person name="Whitlow M."/>
            <person name="Teeter M.M."/>
        </authorList>
    </citation>
    <scope>X-RAY CRYSTALLOGRAPHY (1.67 ANGSTROMS) OF 376-454</scope>
</reference>
<reference key="45">
    <citation type="journal article" date="1998" name="Nat. Struct. Biol.">
        <title>The ternary microplasmin-staphylokinase-microplasmin complex is a proteinase-cofactor-substrate complex in action.</title>
        <authorList>
            <person name="Parry M.A."/>
            <person name="Fernandez-Catalan C."/>
            <person name="Bergner A."/>
            <person name="Huber R."/>
            <person name="Hopfner K.P."/>
            <person name="Schlott B."/>
            <person name="Guehrs K.H."/>
            <person name="Bode W."/>
        </authorList>
    </citation>
    <scope>X-RAY CRYSTALLOGRAPHY (2.65 ANGSTROMS) OF 561-810</scope>
    <scope>DISULFIDE BONDS</scope>
</reference>
<reference key="46">
    <citation type="journal article" date="1998" name="Biochemistry">
        <title>Structure and ligand binding determinants of the recombinant kringle 5 domain of human plasminogen.</title>
        <authorList>
            <person name="Chang Y."/>
            <person name="Mochalkin I."/>
            <person name="McCance S.G."/>
            <person name="Cheng B."/>
            <person name="Tulinsky A."/>
            <person name="Castellino F.J."/>
        </authorList>
    </citation>
    <scope>X-RAY CRYSTALLOGRAPHY (1.66 ANGSTROMS) OF 480-563</scope>
</reference>
<reference key="47">
    <citation type="journal article" date="2000" name="J. Mol. Biol.">
        <title>Human plasminogen catalytic domain undergoes an unusual conformational change upon activation.</title>
        <authorList>
            <person name="Wang X."/>
            <person name="Terzyan S."/>
            <person name="Tang J."/>
            <person name="Loy J.A."/>
            <person name="Lin X."/>
            <person name="Zhang X.C."/>
        </authorList>
    </citation>
    <scope>X-RAY CRYSTALLOGRAPHY (2.0 ANGSTROMS) OF 564-810</scope>
    <scope>DISULFIDE BONDS</scope>
</reference>
<reference key="48">
    <citation type="journal article" date="2001" name="J. Mol. Biol.">
        <title>Structure and binding determinants of the recombinant kringle-2 domain of human plasminogen to an internal peptide from a group A Streptococcal surface protein.</title>
        <authorList>
            <person name="Rios-Steiner J.L."/>
            <person name="Schenone M."/>
            <person name="Mochalkin I."/>
            <person name="Tulinsky A."/>
            <person name="Castellino F.J."/>
        </authorList>
    </citation>
    <scope>X-RAY CRYSTALLOGRAPHY (2.7 ANGSTROMS) OF 183-262</scope>
</reference>
<reference key="49">
    <citation type="journal article" date="2002" name="J. Mol. Biol.">
        <title>The X-ray crystallographic structure of the angiogenesis inhibitor angiostatin.</title>
        <authorList>
            <person name="Abad M.C."/>
            <person name="Arni R.K."/>
            <person name="Grella D.K."/>
            <person name="Castellino F.J."/>
            <person name="Tulinsky A."/>
            <person name="Geiger J.H."/>
        </authorList>
    </citation>
    <scope>X-RAY CRYSTALLOGRAPHY (1.75 ANGSTROMS) OF 100-352</scope>
    <scope>DISULFIDE BONDS</scope>
</reference>
<reference key="50">
    <citation type="journal article" date="2002" name="Protein Eng.">
        <title>Effects of deletion of streptokinase residues 48-59 on plasminogen activation.</title>
        <authorList>
            <person name="Wakeham N."/>
            <person name="Terzyan S."/>
            <person name="Zhai P."/>
            <person name="Loy J.A."/>
            <person name="Tang J."/>
            <person name="Zhang X.C."/>
        </authorList>
    </citation>
    <scope>X-RAY CRYSTALLOGRAPHY (2.3 ANGSTROMS) OF 562-810</scope>
</reference>
<reference key="51">
    <citation type="journal article" date="2004" name="Proteins">
        <title>Characterization of Lys-698-to-Met substitution in human plasminogen catalytic domain.</title>
        <authorList>
            <person name="Terzyan S."/>
            <person name="Wakeham N."/>
            <person name="Zhai P."/>
            <person name="Rodgers K."/>
            <person name="Zhang X.C."/>
        </authorList>
    </citation>
    <scope>X-RAY CRYSTALLOGRAPHY (2.3 ANGSTROMS) OF 564-810</scope>
</reference>
<reference key="52">
    <citation type="journal article" date="2013" name="PLoS ONE">
        <title>The structure of human microplasmin in complex with textilinin-1, an aprotinin-like inhibitor from the Australian brown snake.</title>
        <authorList>
            <person name="Millers E.K."/>
            <person name="Johnson L.A."/>
            <person name="Birrell G.W."/>
            <person name="Masci P.P."/>
            <person name="Lavin M.F."/>
            <person name="de Jersey J."/>
            <person name="Guddat L.W."/>
        </authorList>
    </citation>
    <scope>X-RAY CRYSTALLOGRAPHY (2.78 ANGSTROMS) OF 564-810 IN COMPLEX WITH THE SNAKE VENOM PROTEASE INHIBITOR TEXTILININ-1</scope>
    <scope>DISULFIDE BOND</scope>
</reference>
<reference key="53">
    <citation type="journal article" date="1990" name="J. Mol. Biol.">
        <title>Solution structure of the kringle 4 domain from human plasminogen by 1H nuclear magnetic resonance spectroscopy and distance geometry.</title>
        <authorList>
            <person name="Atkinson R.A."/>
            <person name="Williams R.J.P."/>
        </authorList>
    </citation>
    <scope>STRUCTURE BY NMR OF 374-461</scope>
</reference>
<reference key="54">
    <citation type="journal article" date="1994" name="Eur. J. Biochem.">
        <title>1H-NMR assignments and secondary structure of human plasminogen kringle 1.</title>
        <authorList>
            <person name="Rejante M.R."/>
            <person name="Llinas M."/>
        </authorList>
    </citation>
    <scope>STRUCTURE BY NMR OF 96-184</scope>
</reference>
<reference key="55">
    <citation type="journal article" date="1994" name="Eur. J. Biochem.">
        <title>Solution structure of the epsilon-aminohexanoic acid complex of human plasminogen kringle 1.</title>
        <authorList>
            <person name="Rejante M.R."/>
            <person name="Llinas M."/>
        </authorList>
    </citation>
    <scope>STRUCTURE BY NMR OF 96-184</scope>
</reference>
<reference key="56">
    <citation type="journal article" date="1996" name="Biochemistry">
        <title>Recombinant gene expression and 1H NMR characteristics of the kringle (2 + 3) supermodule: spectroscopic/functional individuality of plasminogen kringle domains.</title>
        <authorList>
            <person name="Soehndel S."/>
            <person name="Hu C.-K."/>
            <person name="Marti D."/>
            <person name="Affolter M."/>
            <person name="Schaller J."/>
            <person name="Llinas M."/>
            <person name="Rickli E.E."/>
        </authorList>
    </citation>
    <scope>STRUCTURE BY NMR OF 183-354</scope>
</reference>
<reference key="57">
    <citation type="journal article" date="1997" name="Biochemistry">
        <title>Ligand preferences of kringle 2 and homologous domains of human plasminogen: canvassing weak, intermediate, and high-affinity binding sites by 1H-NMR.</title>
        <authorList>
            <person name="Marti D.N."/>
            <person name="Hu C.K."/>
            <person name="An S.S."/>
            <person name="von Haller P."/>
            <person name="Schaller J."/>
            <person name="Llinas M."/>
        </authorList>
    </citation>
    <scope>STRUCTURE BY NMR OF 183-263</scope>
</reference>
<reference evidence="51" key="58">
    <citation type="journal article" date="2012" name="J. Biol. Chem.">
        <title>Structural basis for activation of an integral membrane protease by lipopolysaccharide.</title>
        <authorList>
            <person name="Eren E."/>
            <person name="van den Berg B."/>
        </authorList>
    </citation>
    <scope>X-RAY CRYSTALLOGRAPHY (2.03 ANGSTROMS) OF 576-585 IN COMPLEX WITH Y.PESTIS PLASMINOGEN ACTIVATOR</scope>
    <scope>PROTEOLYTIC CLEAVAGE (MICROBIAL INFECTION)</scope>
</reference>
<reference evidence="52" key="59">
    <citation type="journal article" date="2022" name="Protein Sci.">
        <title>Crystal structure of Aedes aegypti trypsin inhibitor in complex with mu-plasmin reveals role for scaffold stability in Kazal-type serine protease inhibitor.</title>
        <authorList>
            <person name="Walvekar V.A."/>
            <person name="Ramesh K."/>
            <person name="Jobichen C."/>
            <person name="Kannan M."/>
            <person name="Sivaraman J."/>
            <person name="Kini R.M."/>
            <person name="Mok Y.K."/>
        </authorList>
    </citation>
    <scope>X-RAY CRYSTALLOGRAPHY (1.95 ANGSTROMS) OF 564-810 IN COMPLEX WITH MOSQUITO KAZAL-TYPE TRYPSIN INHIBITOR</scope>
    <scope>INTERACTION WITH MOSQUITO KAZAL-TYPE TRYPSIN INHIBITOR</scope>
    <scope>DISULFIDE BONDS</scope>
</reference>
<reference key="60">
    <citation type="journal article" date="1991" name="Proc. Natl. Acad. Sci. U.S.A.">
        <title>Two types of abnormal genes for plasminogen in families with a predisposition for thrombosis.</title>
        <authorList>
            <person name="Ichinose A."/>
            <person name="Espling E.S."/>
            <person name="Takamatsu J."/>
            <person name="Saito H."/>
            <person name="Shinmyozu K."/>
            <person name="Maruyama I."/>
            <person name="Petersen T.E."/>
            <person name="Davie E.W."/>
        </authorList>
    </citation>
    <scope>VARIANTS PLGD PHE-374 AND THR-620</scope>
</reference>
<reference key="61">
    <citation type="journal article" date="1991" name="Proc. Natl. Acad. Sci. U.S.A.">
        <authorList>
            <person name="Ichinose A."/>
            <person name="Espling E.S."/>
            <person name="Takamatsu J."/>
            <person name="Saito H."/>
            <person name="Shinmyozu K."/>
            <person name="Maruyama I."/>
            <person name="Petersen T.E."/>
            <person name="Davie E.W."/>
        </authorList>
    </citation>
    <scope>ERRATUM OF PUBMED:1986355</scope>
</reference>
<reference key="62">
    <citation type="journal article" date="1993" name="Blood">
        <title>Congenital plasminogen deficiency caused by a Ser-572 to Pro mutation.</title>
        <authorList>
            <person name="Azuma H."/>
            <person name="Uno Y."/>
            <person name="Shigekiyo T."/>
            <person name="Saito S."/>
        </authorList>
    </citation>
    <scope>VARIANT PLGD PRO-591</scope>
</reference>
<reference key="63">
    <citation type="journal article" date="1982" name="Proc. Natl. Acad. Sci. U.S.A.">
        <title>Plasminogen Tochigi: inactive plasmin resulting from replacement of alanine-600 by threonine in the active site.</title>
        <authorList>
            <person name="Miyata T."/>
            <person name="Iwanaga S."/>
            <person name="Sakata Y."/>
            <person name="Aoki N."/>
        </authorList>
    </citation>
    <scope>VARIANT PLGD THR-620</scope>
</reference>
<reference key="64">
    <citation type="journal article" date="1984" name="J. Biochem.">
        <title>Plasminogens Tochigi II and Nagoya: two additional molecular defects with Ala-600--&gt;Thr replacement found in plasmin light chain variants.</title>
        <authorList>
            <person name="Miyata T."/>
            <person name="Iwanaga S."/>
            <person name="Sakata Y."/>
            <person name="Aoki N."/>
            <person name="Takamatsu J."/>
            <person name="Kamiya T."/>
        </authorList>
    </citation>
    <scope>VARIANT PLGD THR-620</scope>
</reference>
<reference key="65">
    <citation type="journal article" date="1992" name="Hum. Genet.">
        <title>Plasminogen with type-I mutation is polymorphic in the Japanese population.</title>
        <authorList>
            <person name="Kikuchi S."/>
            <person name="Yamanouchi Y."/>
            <person name="Li L."/>
            <person name="Kobayashi K."/>
            <person name="Ijima H."/>
            <person name="Miyazaki R."/>
            <person name="Tsuchiya S."/>
            <person name="Hamaguchi H."/>
        </authorList>
    </citation>
    <scope>VARIANT PLGD THR-620</scope>
</reference>
<reference key="66">
    <citation type="journal article" date="1997" name="Blood">
        <title>Homozygous mutations in the plasminogen gene of two unrelated girls with ligneous conjunctivitis.</title>
        <authorList>
            <person name="Schuster V."/>
            <person name="Mingers A.-M."/>
            <person name="Seidenspinner S."/>
            <person name="Nuessgens Z."/>
            <person name="Pukrop T."/>
            <person name="Kreth H.W."/>
        </authorList>
    </citation>
    <scope>VARIANT PLGD HIS-235</scope>
</reference>
<reference key="67">
    <citation type="journal article" date="1998" name="Br. J. Haematol.">
        <title>Plasminogen Kanagawa-I, a novel missense mutation, is caused by the amino acid substitution G732R.</title>
        <authorList>
            <person name="Higuchi Y."/>
            <person name="Furihata K."/>
            <person name="Ueno I."/>
            <person name="Ishikawa S."/>
            <person name="Okumura N."/>
            <person name="Tozuka M."/>
            <person name="Sakurai N."/>
        </authorList>
    </citation>
    <scope>VARIANT PLGD ARG-751</scope>
</reference>
<reference key="68">
    <citation type="journal article" date="1999" name="Blood">
        <title>Compound-heterozygous mutations in the plasminogen gene predispose to the development of ligneous conjunctivitis.</title>
        <authorList>
            <person name="Schuster V."/>
            <person name="Seidenspinner S."/>
            <person name="Zeitler P."/>
            <person name="Escher C."/>
            <person name="Pleyer U."/>
            <person name="Bernauer W."/>
            <person name="Stiehm E.R."/>
            <person name="Isenberg S."/>
            <person name="Seregard S."/>
            <person name="Olsson T."/>
            <person name="Mingers A.-M."/>
            <person name="Schambeck C."/>
            <person name="Kreth H.W."/>
        </authorList>
    </citation>
    <scope>VARIANTS PLGD GLU-38; PRO-147 AND HIS-532</scope>
</reference>
<reference key="69">
    <citation type="journal article" date="2013" name="J. Infect. Dis.">
        <title>Glycerol-3-phosphate dehydrogenase 2 is a novel factor H-, factor H-like protein 1-, and plasminogen-binding surface protein of Candida albicans.</title>
        <authorList>
            <person name="Luo S."/>
            <person name="Hoffmann R."/>
            <person name="Skerka C."/>
            <person name="Zipfel P.F."/>
        </authorList>
    </citation>
    <scope>INTERACTION WITH C.ALBICANS GPD2 (MICROBIAL INFECTION)</scope>
</reference>
<reference key="70">
    <citation type="journal article" date="2018" name="Allergy">
        <title>Hereditary angioedema with a mutation in the plasminogen gene.</title>
        <authorList>
            <person name="Bork K."/>
            <person name="Wulff K."/>
            <person name="Steinmueller-Magin L."/>
            <person name="Braenne I."/>
            <person name="Staubach-Renz P."/>
            <person name="Witzke G."/>
            <person name="Hardt J."/>
        </authorList>
    </citation>
    <scope>VARIANT HAE4 GLU-330</scope>
    <scope>INVOLVEMENT IN HAE4</scope>
</reference>
<reference key="71">
    <citation type="journal article" date="2018" name="Allergy">
        <title>Plasminogen gene mutation with normal C1 inhibitor hereditary angioedema: Three additional French families.</title>
        <authorList>
            <person name="Belbezier A."/>
            <person name="Hardy G."/>
            <person name="Marlu R."/>
            <person name="Defendi F."/>
            <person name="Dumestre Perard C."/>
            <person name="Boccon-Gibod I."/>
            <person name="Launay D."/>
            <person name="Bouillet L."/>
        </authorList>
    </citation>
    <scope>VARIANT HAE4 GLU-330</scope>
    <scope>INVOLVEMENT IN HAE4</scope>
</reference>
<reference key="72">
    <citation type="journal article" date="2018" name="Allergy">
        <title>A missense mutation of the plasminogen gene in hereditary angioedema with normal C1 inhibitor in Japan.</title>
        <authorList>
            <person name="Yakushiji H."/>
            <person name="Hashimura C."/>
            <person name="Fukuoka K."/>
            <person name="Kaji A."/>
            <person name="Miyahara H."/>
            <person name="Kaname S."/>
            <person name="Horiuchi T."/>
        </authorList>
    </citation>
    <scope>VARIANT HAE4 GLU-330</scope>
    <scope>INVOLVEMENT IN HAE4</scope>
</reference>
<reference key="73">
    <citation type="journal article" date="2018" name="Biochem. Biophys. Res. Commun.">
        <title>A missense mutation in the plasminogen gene, within the plasminogen kringle 3 domain, in hereditary angioedema with normal C1 inhibitor.</title>
        <authorList>
            <person name="Dewald G."/>
        </authorList>
    </citation>
    <scope>VARIANT HAE4 GLU-330</scope>
    <scope>INVOLVEMENT IN HAE4</scope>
</reference>
<reference key="74">
    <citation type="journal article" date="2020" name="J. Clin. Med.">
        <title>Deciphering the genetics of primary angioedema with normal levels of C1 inhibitor.</title>
        <authorList>
            <person name="Loules G."/>
            <person name="Parsopoulou F."/>
            <person name="Zamanakou M."/>
            <person name="Csuka D."/>
            <person name="Bova M."/>
            <person name="Gonzalez-Quevedo T."/>
            <person name="Psarros F."/>
            <person name="Porebski G."/>
            <person name="Speletas M."/>
            <person name="Firinu D."/>
            <person name="Del Giacco S."/>
            <person name="Suffritti C."/>
            <person name="Makris M."/>
            <person name="Vatsiou S."/>
            <person name="Zanichelli A."/>
            <person name="Farkas H."/>
            <person name="Germenis A.E."/>
        </authorList>
    </citation>
    <scope>VARIANTS HAE4 GLU-330 AND GLU-728</scope>
    <scope>VARIANT LYS-89</scope>
</reference>
<reference key="75">
    <citation type="journal article" date="2021" name="Genes (Basel)">
        <title>Screening for plasminogen mutations in hereditary angioedema patients.</title>
        <authorList>
            <person name="Farkas H."/>
            <person name="Doczy A."/>
            <person name="Szabo E."/>
            <person name="Varga L."/>
            <person name="Csuka D."/>
        </authorList>
    </citation>
    <scope>VARIANT HAE4 GLU-330</scope>
</reference>
<organism>
    <name type="scientific">Homo sapiens</name>
    <name type="common">Human</name>
    <dbReference type="NCBI Taxonomy" id="9606"/>
    <lineage>
        <taxon>Eukaryota</taxon>
        <taxon>Metazoa</taxon>
        <taxon>Chordata</taxon>
        <taxon>Craniata</taxon>
        <taxon>Vertebrata</taxon>
        <taxon>Euteleostomi</taxon>
        <taxon>Mammalia</taxon>
        <taxon>Eutheria</taxon>
        <taxon>Euarchontoglires</taxon>
        <taxon>Primates</taxon>
        <taxon>Haplorrhini</taxon>
        <taxon>Catarrhini</taxon>
        <taxon>Hominidae</taxon>
        <taxon>Homo</taxon>
    </lineage>
</organism>
<protein>
    <recommendedName>
        <fullName evidence="48">Plasminogen</fullName>
        <ecNumber evidence="17 37">3.4.21.7</ecNumber>
    </recommendedName>
    <component>
        <recommendedName>
            <fullName>Plasmin heavy chain A</fullName>
        </recommendedName>
    </component>
    <component>
        <recommendedName>
            <fullName>Activation peptide</fullName>
        </recommendedName>
    </component>
    <component>
        <recommendedName>
            <fullName evidence="49">Angiostatin</fullName>
        </recommendedName>
    </component>
    <component>
        <recommendedName>
            <fullName>Plasmin heavy chain A, short form</fullName>
        </recommendedName>
    </component>
    <component>
        <recommendedName>
            <fullName>Plasmin light chain B</fullName>
        </recommendedName>
    </component>
</protein>
<accession>P00747</accession>
<accession>Q15146</accession>
<accession>Q5TEH4</accession>
<accession>Q6PA00</accession>